<keyword id="KW-0002">3D-structure</keyword>
<keyword id="KW-0007">Acetylation</keyword>
<keyword id="KW-0025">Alternative splicing</keyword>
<keyword id="KW-0067">ATP-binding</keyword>
<keyword id="KW-0963">Cytoplasm</keyword>
<keyword id="KW-0227">DNA damage</keyword>
<keyword id="KW-0234">DNA repair</keyword>
<keyword id="KW-0945">Host-virus interaction</keyword>
<keyword id="KW-0418">Kinase</keyword>
<keyword id="KW-0547">Nucleotide-binding</keyword>
<keyword id="KW-0539">Nucleus</keyword>
<keyword id="KW-0597">Phosphoprotein</keyword>
<keyword id="KW-1267">Proteomics identification</keyword>
<keyword id="KW-1185">Reference proteome</keyword>
<keyword id="KW-0723">Serine/threonine-protein kinase</keyword>
<keyword id="KW-0804">Transcription</keyword>
<keyword id="KW-0805">Transcription regulation</keyword>
<keyword id="KW-0808">Transferase</keyword>
<keyword id="KW-0832">Ubl conjugation</keyword>
<dbReference type="EC" id="2.7.11.22" evidence="16 24 45"/>
<dbReference type="EC" id="2.7.11.23" evidence="46 55"/>
<dbReference type="EMBL" id="L25676">
    <property type="protein sequence ID" value="AAA35668.1"/>
    <property type="molecule type" value="mRNA"/>
</dbReference>
<dbReference type="EMBL" id="X80230">
    <property type="protein sequence ID" value="CAA56516.1"/>
    <property type="molecule type" value="mRNA"/>
</dbReference>
<dbReference type="EMBL" id="AF255306">
    <property type="protein sequence ID" value="AAF72183.1"/>
    <property type="molecule type" value="Genomic_DNA"/>
</dbReference>
<dbReference type="EMBL" id="BT019903">
    <property type="protein sequence ID" value="AAV38706.1"/>
    <property type="molecule type" value="mRNA"/>
</dbReference>
<dbReference type="EMBL" id="AF517840">
    <property type="protein sequence ID" value="AAM54039.1"/>
    <property type="molecule type" value="Genomic_DNA"/>
</dbReference>
<dbReference type="EMBL" id="AL162586">
    <property type="status" value="NOT_ANNOTATED_CDS"/>
    <property type="molecule type" value="Genomic_DNA"/>
</dbReference>
<dbReference type="EMBL" id="BC001968">
    <property type="protein sequence ID" value="AAH01968.1"/>
    <property type="molecule type" value="mRNA"/>
</dbReference>
<dbReference type="CCDS" id="CCDS6879.1">
    <molecule id="P50750-1"/>
</dbReference>
<dbReference type="PIR" id="A55262">
    <property type="entry name" value="A55262"/>
</dbReference>
<dbReference type="RefSeq" id="NP_001252.1">
    <molecule id="P50750-1"/>
    <property type="nucleotide sequence ID" value="NM_001261.4"/>
</dbReference>
<dbReference type="PDB" id="3BLH">
    <property type="method" value="X-ray"/>
    <property type="resolution" value="2.48 A"/>
    <property type="chains" value="A=2-330"/>
</dbReference>
<dbReference type="PDB" id="3BLQ">
    <property type="method" value="X-ray"/>
    <property type="resolution" value="2.90 A"/>
    <property type="chains" value="A=2-330"/>
</dbReference>
<dbReference type="PDB" id="3BLR">
    <property type="method" value="X-ray"/>
    <property type="resolution" value="2.80 A"/>
    <property type="chains" value="A=2-330"/>
</dbReference>
<dbReference type="PDB" id="3LQ5">
    <property type="method" value="X-ray"/>
    <property type="resolution" value="3.00 A"/>
    <property type="chains" value="A=2-330"/>
</dbReference>
<dbReference type="PDB" id="3MI9">
    <property type="method" value="X-ray"/>
    <property type="resolution" value="2.10 A"/>
    <property type="chains" value="A=1-345"/>
</dbReference>
<dbReference type="PDB" id="3MIA">
    <property type="method" value="X-ray"/>
    <property type="resolution" value="3.00 A"/>
    <property type="chains" value="A=1-345"/>
</dbReference>
<dbReference type="PDB" id="3MY1">
    <property type="method" value="X-ray"/>
    <property type="resolution" value="2.80 A"/>
    <property type="chains" value="A=2-330"/>
</dbReference>
<dbReference type="PDB" id="3TN8">
    <property type="method" value="X-ray"/>
    <property type="resolution" value="2.95 A"/>
    <property type="chains" value="A=2-330"/>
</dbReference>
<dbReference type="PDB" id="3TNH">
    <property type="method" value="X-ray"/>
    <property type="resolution" value="3.20 A"/>
    <property type="chains" value="A=2-330"/>
</dbReference>
<dbReference type="PDB" id="3TNI">
    <property type="method" value="X-ray"/>
    <property type="resolution" value="3.23 A"/>
    <property type="chains" value="A=2-330"/>
</dbReference>
<dbReference type="PDB" id="4BCF">
    <property type="method" value="X-ray"/>
    <property type="resolution" value="3.01 A"/>
    <property type="chains" value="A=2-330"/>
</dbReference>
<dbReference type="PDB" id="4BCG">
    <property type="method" value="X-ray"/>
    <property type="resolution" value="3.08 A"/>
    <property type="chains" value="A=2-330"/>
</dbReference>
<dbReference type="PDB" id="4BCH">
    <property type="method" value="X-ray"/>
    <property type="resolution" value="2.96 A"/>
    <property type="chains" value="A=2-330"/>
</dbReference>
<dbReference type="PDB" id="4BCI">
    <property type="method" value="X-ray"/>
    <property type="resolution" value="3.10 A"/>
    <property type="chains" value="A=2-330"/>
</dbReference>
<dbReference type="PDB" id="4BCJ">
    <property type="method" value="X-ray"/>
    <property type="resolution" value="3.16 A"/>
    <property type="chains" value="A=2-330"/>
</dbReference>
<dbReference type="PDB" id="4EC8">
    <property type="method" value="X-ray"/>
    <property type="resolution" value="3.60 A"/>
    <property type="chains" value="A=2-372"/>
</dbReference>
<dbReference type="PDB" id="4EC9">
    <property type="method" value="X-ray"/>
    <property type="resolution" value="3.21 A"/>
    <property type="chains" value="A=2-372"/>
</dbReference>
<dbReference type="PDB" id="4IMY">
    <property type="method" value="X-ray"/>
    <property type="resolution" value="2.94 A"/>
    <property type="chains" value="A/C/E=1-330"/>
</dbReference>
<dbReference type="PDB" id="4OGR">
    <property type="method" value="X-ray"/>
    <property type="resolution" value="3.00 A"/>
    <property type="chains" value="A/E/I=1-330"/>
</dbReference>
<dbReference type="PDB" id="4OR5">
    <property type="method" value="X-ray"/>
    <property type="resolution" value="2.90 A"/>
    <property type="chains" value="A/F=7-332"/>
</dbReference>
<dbReference type="PDB" id="5L1Z">
    <property type="method" value="X-ray"/>
    <property type="resolution" value="5.90 A"/>
    <property type="chains" value="A=1-330"/>
</dbReference>
<dbReference type="PDB" id="6CYT">
    <property type="method" value="X-ray"/>
    <property type="resolution" value="3.50 A"/>
    <property type="chains" value="A=1-330"/>
</dbReference>
<dbReference type="PDB" id="6GZH">
    <property type="method" value="X-ray"/>
    <property type="resolution" value="3.17 A"/>
    <property type="chains" value="A=1-326"/>
</dbReference>
<dbReference type="PDB" id="6W9E">
    <property type="method" value="X-ray"/>
    <property type="resolution" value="3.10 A"/>
    <property type="chains" value="A=1-330"/>
</dbReference>
<dbReference type="PDB" id="6Z45">
    <property type="method" value="X-ray"/>
    <property type="resolution" value="3.37 A"/>
    <property type="chains" value="A=1-330"/>
</dbReference>
<dbReference type="PDB" id="7NWK">
    <property type="method" value="X-ray"/>
    <property type="resolution" value="2.81 A"/>
    <property type="chains" value="A=1-330"/>
</dbReference>
<dbReference type="PDB" id="8I0L">
    <property type="method" value="X-ray"/>
    <property type="resolution" value="3.60 A"/>
    <property type="chains" value="A=2-330"/>
</dbReference>
<dbReference type="PDB" id="8K5R">
    <property type="method" value="X-ray"/>
    <property type="resolution" value="3.75 A"/>
    <property type="chains" value="A=1-330"/>
</dbReference>
<dbReference type="PDBsum" id="3BLH"/>
<dbReference type="PDBsum" id="3BLQ"/>
<dbReference type="PDBsum" id="3BLR"/>
<dbReference type="PDBsum" id="3LQ5"/>
<dbReference type="PDBsum" id="3MI9"/>
<dbReference type="PDBsum" id="3MIA"/>
<dbReference type="PDBsum" id="3MY1"/>
<dbReference type="PDBsum" id="3TN8"/>
<dbReference type="PDBsum" id="3TNH"/>
<dbReference type="PDBsum" id="3TNI"/>
<dbReference type="PDBsum" id="4BCF"/>
<dbReference type="PDBsum" id="4BCG"/>
<dbReference type="PDBsum" id="4BCH"/>
<dbReference type="PDBsum" id="4BCI"/>
<dbReference type="PDBsum" id="4BCJ"/>
<dbReference type="PDBsum" id="4EC8"/>
<dbReference type="PDBsum" id="4EC9"/>
<dbReference type="PDBsum" id="4IMY"/>
<dbReference type="PDBsum" id="4OGR"/>
<dbReference type="PDBsum" id="4OR5"/>
<dbReference type="PDBsum" id="5L1Z"/>
<dbReference type="PDBsum" id="6CYT"/>
<dbReference type="PDBsum" id="6GZH"/>
<dbReference type="PDBsum" id="6W9E"/>
<dbReference type="PDBsum" id="6Z45"/>
<dbReference type="PDBsum" id="7NWK"/>
<dbReference type="PDBsum" id="8I0L"/>
<dbReference type="PDBsum" id="8K5R"/>
<dbReference type="SMR" id="P50750"/>
<dbReference type="BioGRID" id="107459">
    <property type="interactions" value="696"/>
</dbReference>
<dbReference type="ComplexPortal" id="CPX-222">
    <property type="entry name" value="Positive transcription elongation factor B, CDK9-cyclinT1 complex"/>
</dbReference>
<dbReference type="ComplexPortal" id="CPX-321">
    <property type="entry name" value="Positive transcription elongation factor B, CDK9-cyclinT2a complex"/>
</dbReference>
<dbReference type="ComplexPortal" id="CPX-322">
    <property type="entry name" value="Positive transcription elongation factor B, CDK9-cyclinT2b complex"/>
</dbReference>
<dbReference type="CORUM" id="P50750"/>
<dbReference type="DIP" id="DIP-29016N"/>
<dbReference type="ELM" id="P50750"/>
<dbReference type="FunCoup" id="P50750">
    <property type="interactions" value="3828"/>
</dbReference>
<dbReference type="IntAct" id="P50750">
    <property type="interactions" value="123"/>
</dbReference>
<dbReference type="MINT" id="P50750"/>
<dbReference type="STRING" id="9606.ENSP00000362361"/>
<dbReference type="BindingDB" id="P50750"/>
<dbReference type="ChEMBL" id="CHEMBL3116"/>
<dbReference type="DrugBank" id="DB07149">
    <property type="generic name" value="(7S)-2-(2-aminopyrimidin-4-yl)-7-(2-fluoroethyl)-1,5,6,7-tetrahydro-4H-pyrrolo[3,2-c]pyridin-4-one"/>
</dbReference>
<dbReference type="DrugBank" id="DB08178">
    <property type="generic name" value="4-(4-methoxy-1H-pyrrolo[2,3-b]pyridin-3-yl)pyrimidin-2-amine"/>
</dbReference>
<dbReference type="DrugBank" id="DB08182">
    <property type="generic name" value="4-(4-propoxy-1H-pyrrolo[2,3-b]pyridin-3-yl)pyrimidin-2-amine"/>
</dbReference>
<dbReference type="DrugBank" id="DB03496">
    <property type="generic name" value="Alvocidib"/>
</dbReference>
<dbReference type="DrugBank" id="DB15425">
    <property type="generic name" value="CYC-065"/>
</dbReference>
<dbReference type="DrugBank" id="DB12021">
    <property type="generic name" value="Dinaciclib"/>
</dbReference>
<dbReference type="DrugBank" id="DB06195">
    <property type="generic name" value="Seliciclib"/>
</dbReference>
<dbReference type="DrugBank" id="DB05969">
    <property type="generic name" value="SNS-032"/>
</dbReference>
<dbReference type="DrugBank" id="DB18104">
    <property type="generic name" value="TP-1287"/>
</dbReference>
<dbReference type="DrugBank" id="DB15442">
    <property type="generic name" value="Trilaciclib"/>
</dbReference>
<dbReference type="DrugBank" id="DB18823">
    <property type="generic name" value="Zemirciclib"/>
</dbReference>
<dbReference type="DrugBank" id="DB16656">
    <property type="generic name" value="Zotiraciclib"/>
</dbReference>
<dbReference type="DrugCentral" id="P50750"/>
<dbReference type="GuidetoPHARMACOLOGY" id="1981"/>
<dbReference type="GlyGen" id="P50750">
    <property type="glycosylation" value="1 site, 1 O-linked glycan (1 site)"/>
</dbReference>
<dbReference type="iPTMnet" id="P50750"/>
<dbReference type="PhosphoSitePlus" id="P50750"/>
<dbReference type="SwissPalm" id="P50750"/>
<dbReference type="BioMuta" id="CDK9"/>
<dbReference type="DMDM" id="68067660"/>
<dbReference type="CPTAC" id="CPTAC-1602"/>
<dbReference type="CPTAC" id="CPTAC-2941"/>
<dbReference type="CPTAC" id="CPTAC-2942"/>
<dbReference type="jPOST" id="P50750"/>
<dbReference type="MassIVE" id="P50750"/>
<dbReference type="PaxDb" id="9606-ENSP00000362361"/>
<dbReference type="PeptideAtlas" id="P50750"/>
<dbReference type="ProteomicsDB" id="56263">
    <molecule id="P50750-1"/>
</dbReference>
<dbReference type="ProteomicsDB" id="56264">
    <molecule id="P50750-2"/>
</dbReference>
<dbReference type="Pumba" id="P50750"/>
<dbReference type="Antibodypedia" id="1447">
    <property type="antibodies" value="563 antibodies from 41 providers"/>
</dbReference>
<dbReference type="DNASU" id="1025"/>
<dbReference type="Ensembl" id="ENST00000373264.5">
    <molecule id="P50750-1"/>
    <property type="protein sequence ID" value="ENSP00000362361.4"/>
    <property type="gene ID" value="ENSG00000136807.14"/>
</dbReference>
<dbReference type="GeneID" id="1025"/>
<dbReference type="KEGG" id="hsa:1025"/>
<dbReference type="MANE-Select" id="ENST00000373264.5">
    <property type="protein sequence ID" value="ENSP00000362361.4"/>
    <property type="RefSeq nucleotide sequence ID" value="NM_001261.4"/>
    <property type="RefSeq protein sequence ID" value="NP_001252.1"/>
</dbReference>
<dbReference type="UCSC" id="uc004bse.3">
    <molecule id="P50750-1"/>
    <property type="organism name" value="human"/>
</dbReference>
<dbReference type="AGR" id="HGNC:1780"/>
<dbReference type="CTD" id="1025"/>
<dbReference type="DisGeNET" id="1025"/>
<dbReference type="GeneCards" id="CDK9"/>
<dbReference type="HGNC" id="HGNC:1780">
    <property type="gene designation" value="CDK9"/>
</dbReference>
<dbReference type="HPA" id="ENSG00000136807">
    <property type="expression patterns" value="Low tissue specificity"/>
</dbReference>
<dbReference type="MalaCards" id="CDK9"/>
<dbReference type="MIM" id="603251">
    <property type="type" value="gene"/>
</dbReference>
<dbReference type="neXtProt" id="NX_P50750"/>
<dbReference type="OpenTargets" id="ENSG00000136807"/>
<dbReference type="PharmGKB" id="PA26316"/>
<dbReference type="VEuPathDB" id="HostDB:ENSG00000136807"/>
<dbReference type="eggNOG" id="KOG0669">
    <property type="taxonomic scope" value="Eukaryota"/>
</dbReference>
<dbReference type="GeneTree" id="ENSGT00940000155373"/>
<dbReference type="HOGENOM" id="CLU_000288_181_1_1"/>
<dbReference type="InParanoid" id="P50750"/>
<dbReference type="OMA" id="FPHCDES"/>
<dbReference type="OrthoDB" id="204883at2759"/>
<dbReference type="PAN-GO" id="P50750">
    <property type="GO annotations" value="5 GO annotations based on evolutionary models"/>
</dbReference>
<dbReference type="PhylomeDB" id="P50750"/>
<dbReference type="TreeFam" id="TF101039"/>
<dbReference type="BRENDA" id="2.7.11.22">
    <property type="organism ID" value="2681"/>
</dbReference>
<dbReference type="BRENDA" id="2.7.11.23">
    <property type="organism ID" value="2681"/>
</dbReference>
<dbReference type="PathwayCommons" id="P50750"/>
<dbReference type="Reactome" id="R-HSA-112382">
    <property type="pathway name" value="Formation of RNA Pol II elongation complex"/>
</dbReference>
<dbReference type="Reactome" id="R-HSA-167152">
    <property type="pathway name" value="Formation of HIV elongation complex in the absence of HIV Tat"/>
</dbReference>
<dbReference type="Reactome" id="R-HSA-167200">
    <property type="pathway name" value="Formation of HIV-1 elongation complex containing HIV-1 Tat"/>
</dbReference>
<dbReference type="Reactome" id="R-HSA-167238">
    <property type="pathway name" value="Pausing and recovery of Tat-mediated HIV elongation"/>
</dbReference>
<dbReference type="Reactome" id="R-HSA-167243">
    <property type="pathway name" value="Tat-mediated HIV elongation arrest and recovery"/>
</dbReference>
<dbReference type="Reactome" id="R-HSA-167246">
    <property type="pathway name" value="Tat-mediated elongation of the HIV-1 transcript"/>
</dbReference>
<dbReference type="Reactome" id="R-HSA-167287">
    <property type="pathway name" value="HIV elongation arrest and recovery"/>
</dbReference>
<dbReference type="Reactome" id="R-HSA-167290">
    <property type="pathway name" value="Pausing and recovery of HIV elongation"/>
</dbReference>
<dbReference type="Reactome" id="R-HSA-176034">
    <property type="pathway name" value="Interactions of Tat with host cellular proteins"/>
</dbReference>
<dbReference type="Reactome" id="R-HSA-2173796">
    <property type="pathway name" value="SMAD2/SMAD3:SMAD4 heterotrimer regulates transcription"/>
</dbReference>
<dbReference type="Reactome" id="R-HSA-674695">
    <property type="pathway name" value="RNA Polymerase II Pre-transcription Events"/>
</dbReference>
<dbReference type="Reactome" id="R-HSA-6796648">
    <property type="pathway name" value="TP53 Regulates Transcription of DNA Repair Genes"/>
</dbReference>
<dbReference type="Reactome" id="R-HSA-6807505">
    <property type="pathway name" value="RNA polymerase II transcribes snRNA genes"/>
</dbReference>
<dbReference type="Reactome" id="R-HSA-75955">
    <property type="pathway name" value="RNA Polymerase II Transcription Elongation"/>
</dbReference>
<dbReference type="Reactome" id="R-HSA-9018519">
    <property type="pathway name" value="Estrogen-dependent gene expression"/>
</dbReference>
<dbReference type="SignaLink" id="P50750"/>
<dbReference type="SIGNOR" id="P50750"/>
<dbReference type="BioGRID-ORCS" id="1025">
    <property type="hits" value="874 hits in 1185 CRISPR screens"/>
</dbReference>
<dbReference type="CD-CODE" id="38EC0B30">
    <property type="entry name" value="Transcriptional condensate"/>
</dbReference>
<dbReference type="CD-CODE" id="804901D1">
    <property type="entry name" value="Nuclear speckle"/>
</dbReference>
<dbReference type="CD-CODE" id="91857CE7">
    <property type="entry name" value="Nucleolus"/>
</dbReference>
<dbReference type="ChiTaRS" id="CDK9">
    <property type="organism name" value="human"/>
</dbReference>
<dbReference type="EvolutionaryTrace" id="P50750"/>
<dbReference type="GeneWiki" id="CDK9"/>
<dbReference type="GeneWiki" id="Cyclin-dependent_kinase_9"/>
<dbReference type="GenomeRNAi" id="1025"/>
<dbReference type="Pharos" id="P50750">
    <property type="development level" value="Tchem"/>
</dbReference>
<dbReference type="PRO" id="PR:P50750"/>
<dbReference type="Proteomes" id="UP000005640">
    <property type="component" value="Chromosome 9"/>
</dbReference>
<dbReference type="RNAct" id="P50750">
    <property type="molecule type" value="protein"/>
</dbReference>
<dbReference type="Bgee" id="ENSG00000136807">
    <property type="expression patterns" value="Expressed in right uterine tube and 137 other cell types or tissues"/>
</dbReference>
<dbReference type="ExpressionAtlas" id="P50750">
    <property type="expression patterns" value="baseline and differential"/>
</dbReference>
<dbReference type="GO" id="GO:0008024">
    <property type="term" value="C:cyclin/CDK positive transcription elongation factor complex"/>
    <property type="evidence" value="ECO:0000314"/>
    <property type="project" value="UniProtKB"/>
</dbReference>
<dbReference type="GO" id="GO:0036464">
    <property type="term" value="C:cytoplasmic ribonucleoprotein granule"/>
    <property type="evidence" value="ECO:0000314"/>
    <property type="project" value="HPA"/>
</dbReference>
<dbReference type="GO" id="GO:0016020">
    <property type="term" value="C:membrane"/>
    <property type="evidence" value="ECO:0007005"/>
    <property type="project" value="UniProtKB"/>
</dbReference>
<dbReference type="GO" id="GO:0005654">
    <property type="term" value="C:nucleoplasm"/>
    <property type="evidence" value="ECO:0000314"/>
    <property type="project" value="HPA"/>
</dbReference>
<dbReference type="GO" id="GO:0005634">
    <property type="term" value="C:nucleus"/>
    <property type="evidence" value="ECO:0000314"/>
    <property type="project" value="UniProt"/>
</dbReference>
<dbReference type="GO" id="GO:0070691">
    <property type="term" value="C:P-TEFb complex"/>
    <property type="evidence" value="ECO:0000314"/>
    <property type="project" value="UniProtKB"/>
</dbReference>
<dbReference type="GO" id="GO:0016605">
    <property type="term" value="C:PML body"/>
    <property type="evidence" value="ECO:0000314"/>
    <property type="project" value="UniProtKB"/>
</dbReference>
<dbReference type="GO" id="GO:0008023">
    <property type="term" value="C:transcription elongation factor complex"/>
    <property type="evidence" value="ECO:0000314"/>
    <property type="project" value="UniProtKB"/>
</dbReference>
<dbReference type="GO" id="GO:0097322">
    <property type="term" value="F:7SK snRNA binding"/>
    <property type="evidence" value="ECO:0000314"/>
    <property type="project" value="UniProtKB"/>
</dbReference>
<dbReference type="GO" id="GO:0005524">
    <property type="term" value="F:ATP binding"/>
    <property type="evidence" value="ECO:0007669"/>
    <property type="project" value="UniProtKB-KW"/>
</dbReference>
<dbReference type="GO" id="GO:0003682">
    <property type="term" value="F:chromatin binding"/>
    <property type="evidence" value="ECO:0000250"/>
    <property type="project" value="UniProtKB"/>
</dbReference>
<dbReference type="GO" id="GO:0004693">
    <property type="term" value="F:cyclin-dependent protein serine/threonine kinase activity"/>
    <property type="evidence" value="ECO:0000314"/>
    <property type="project" value="UniProtKB"/>
</dbReference>
<dbReference type="GO" id="GO:0003677">
    <property type="term" value="F:DNA binding"/>
    <property type="evidence" value="ECO:0000314"/>
    <property type="project" value="MGI"/>
</dbReference>
<dbReference type="GO" id="GO:0016301">
    <property type="term" value="F:kinase activity"/>
    <property type="evidence" value="ECO:0000314"/>
    <property type="project" value="DisProt"/>
</dbReference>
<dbReference type="GO" id="GO:0004672">
    <property type="term" value="F:protein kinase activity"/>
    <property type="evidence" value="ECO:0000304"/>
    <property type="project" value="ProtInc"/>
</dbReference>
<dbReference type="GO" id="GO:0019901">
    <property type="term" value="F:protein kinase binding"/>
    <property type="evidence" value="ECO:0007669"/>
    <property type="project" value="Ensembl"/>
</dbReference>
<dbReference type="GO" id="GO:0106310">
    <property type="term" value="F:protein serine kinase activity"/>
    <property type="evidence" value="ECO:0007669"/>
    <property type="project" value="RHEA"/>
</dbReference>
<dbReference type="GO" id="GO:0004674">
    <property type="term" value="F:protein serine/threonine kinase activity"/>
    <property type="evidence" value="ECO:0000314"/>
    <property type="project" value="UniProtKB"/>
</dbReference>
<dbReference type="GO" id="GO:0000978">
    <property type="term" value="F:RNA polymerase II cis-regulatory region sequence-specific DNA binding"/>
    <property type="evidence" value="ECO:0007669"/>
    <property type="project" value="Ensembl"/>
</dbReference>
<dbReference type="GO" id="GO:0008353">
    <property type="term" value="F:RNA polymerase II CTD heptapeptide repeat kinase activity"/>
    <property type="evidence" value="ECO:0000314"/>
    <property type="project" value="UniProtKB"/>
</dbReference>
<dbReference type="GO" id="GO:0001223">
    <property type="term" value="F:transcription coactivator binding"/>
    <property type="evidence" value="ECO:0000353"/>
    <property type="project" value="UniProtKB"/>
</dbReference>
<dbReference type="GO" id="GO:0003711">
    <property type="term" value="F:transcription elongation factor activity"/>
    <property type="evidence" value="ECO:0000314"/>
    <property type="project" value="HGNC-UCL"/>
</dbReference>
<dbReference type="GO" id="GO:0008283">
    <property type="term" value="P:cell population proliferation"/>
    <property type="evidence" value="ECO:0000304"/>
    <property type="project" value="ProtInc"/>
</dbReference>
<dbReference type="GO" id="GO:0071345">
    <property type="term" value="P:cellular response to cytokine stimulus"/>
    <property type="evidence" value="ECO:0000314"/>
    <property type="project" value="UniProtKB"/>
</dbReference>
<dbReference type="GO" id="GO:0006281">
    <property type="term" value="P:DNA repair"/>
    <property type="evidence" value="ECO:0007669"/>
    <property type="project" value="UniProtKB-KW"/>
</dbReference>
<dbReference type="GO" id="GO:0120186">
    <property type="term" value="P:negative regulation of protein localization to chromatin"/>
    <property type="evidence" value="ECO:0000314"/>
    <property type="project" value="UniProt"/>
</dbReference>
<dbReference type="GO" id="GO:0051647">
    <property type="term" value="P:nucleus localization"/>
    <property type="evidence" value="ECO:0000314"/>
    <property type="project" value="DisProt"/>
</dbReference>
<dbReference type="GO" id="GO:0043923">
    <property type="term" value="P:positive regulation by host of viral transcription"/>
    <property type="evidence" value="ECO:0000314"/>
    <property type="project" value="ComplexPortal"/>
</dbReference>
<dbReference type="GO" id="GO:0120187">
    <property type="term" value="P:positive regulation of protein localization to chromatin"/>
    <property type="evidence" value="ECO:0000314"/>
    <property type="project" value="UniProtKB"/>
</dbReference>
<dbReference type="GO" id="GO:0045944">
    <property type="term" value="P:positive regulation of transcription by RNA polymerase II"/>
    <property type="evidence" value="ECO:0000314"/>
    <property type="project" value="UniProtKB"/>
</dbReference>
<dbReference type="GO" id="GO:0032968">
    <property type="term" value="P:positive regulation of transcription elongation by RNA polymerase II"/>
    <property type="evidence" value="ECO:0000314"/>
    <property type="project" value="UniProtKB"/>
</dbReference>
<dbReference type="GO" id="GO:0006468">
    <property type="term" value="P:protein phosphorylation"/>
    <property type="evidence" value="ECO:0000314"/>
    <property type="project" value="MGI"/>
</dbReference>
<dbReference type="GO" id="GO:0051726">
    <property type="term" value="P:regulation of cell cycle"/>
    <property type="evidence" value="ECO:0000314"/>
    <property type="project" value="UniProtKB"/>
</dbReference>
<dbReference type="GO" id="GO:0006282">
    <property type="term" value="P:regulation of DNA repair"/>
    <property type="evidence" value="ECO:0000314"/>
    <property type="project" value="UniProtKB"/>
</dbReference>
<dbReference type="GO" id="GO:0031440">
    <property type="term" value="P:regulation of mRNA 3'-end processing"/>
    <property type="evidence" value="ECO:0000315"/>
    <property type="project" value="UniProtKB"/>
</dbReference>
<dbReference type="GO" id="GO:0051147">
    <property type="term" value="P:regulation of muscle cell differentiation"/>
    <property type="evidence" value="ECO:0000315"/>
    <property type="project" value="UniProtKB"/>
</dbReference>
<dbReference type="GO" id="GO:0031297">
    <property type="term" value="P:replication fork processing"/>
    <property type="evidence" value="ECO:0000314"/>
    <property type="project" value="UniProtKB"/>
</dbReference>
<dbReference type="GO" id="GO:0006366">
    <property type="term" value="P:transcription by RNA polymerase II"/>
    <property type="evidence" value="ECO:0000314"/>
    <property type="project" value="UniProtKB"/>
</dbReference>
<dbReference type="GO" id="GO:0006368">
    <property type="term" value="P:transcription elongation by RNA polymerase II"/>
    <property type="evidence" value="ECO:0000314"/>
    <property type="project" value="UniProtKB"/>
</dbReference>
<dbReference type="GO" id="GO:0140673">
    <property type="term" value="P:transcription elongation-coupled chromatin remodeling"/>
    <property type="evidence" value="ECO:0000314"/>
    <property type="project" value="UniProtKB"/>
</dbReference>
<dbReference type="GO" id="GO:0006367">
    <property type="term" value="P:transcription initiation at RNA polymerase II promoter"/>
    <property type="evidence" value="ECO:0000304"/>
    <property type="project" value="ProtInc"/>
</dbReference>
<dbReference type="CDD" id="cd07865">
    <property type="entry name" value="STKc_CDK9"/>
    <property type="match status" value="1"/>
</dbReference>
<dbReference type="DisProt" id="DP01309"/>
<dbReference type="FunFam" id="1.10.510.10:FF:000203">
    <property type="entry name" value="Cyclin-dependent kinase 9"/>
    <property type="match status" value="1"/>
</dbReference>
<dbReference type="FunFam" id="3.30.200.20:FF:000227">
    <property type="entry name" value="Cyclin-dependent kinase 9"/>
    <property type="match status" value="1"/>
</dbReference>
<dbReference type="Gene3D" id="3.30.200.20">
    <property type="entry name" value="Phosphorylase Kinase, domain 1"/>
    <property type="match status" value="1"/>
</dbReference>
<dbReference type="Gene3D" id="1.10.510.10">
    <property type="entry name" value="Transferase(Phosphotransferase) domain 1"/>
    <property type="match status" value="1"/>
</dbReference>
<dbReference type="InterPro" id="IPR050108">
    <property type="entry name" value="CDK"/>
</dbReference>
<dbReference type="InterPro" id="IPR011009">
    <property type="entry name" value="Kinase-like_dom_sf"/>
</dbReference>
<dbReference type="InterPro" id="IPR000719">
    <property type="entry name" value="Prot_kinase_dom"/>
</dbReference>
<dbReference type="InterPro" id="IPR017441">
    <property type="entry name" value="Protein_kinase_ATP_BS"/>
</dbReference>
<dbReference type="InterPro" id="IPR008271">
    <property type="entry name" value="Ser/Thr_kinase_AS"/>
</dbReference>
<dbReference type="PANTHER" id="PTHR24056">
    <property type="entry name" value="CELL DIVISION PROTEIN KINASE"/>
    <property type="match status" value="1"/>
</dbReference>
<dbReference type="PANTHER" id="PTHR24056:SF233">
    <property type="entry name" value="CYCLIN-DEPENDENT KINASE 9"/>
    <property type="match status" value="1"/>
</dbReference>
<dbReference type="Pfam" id="PF00069">
    <property type="entry name" value="Pkinase"/>
    <property type="match status" value="1"/>
</dbReference>
<dbReference type="SMART" id="SM00220">
    <property type="entry name" value="S_TKc"/>
    <property type="match status" value="1"/>
</dbReference>
<dbReference type="SUPFAM" id="SSF56112">
    <property type="entry name" value="Protein kinase-like (PK-like)"/>
    <property type="match status" value="1"/>
</dbReference>
<dbReference type="PROSITE" id="PS00107">
    <property type="entry name" value="PROTEIN_KINASE_ATP"/>
    <property type="match status" value="1"/>
</dbReference>
<dbReference type="PROSITE" id="PS50011">
    <property type="entry name" value="PROTEIN_KINASE_DOM"/>
    <property type="match status" value="1"/>
</dbReference>
<dbReference type="PROSITE" id="PS00108">
    <property type="entry name" value="PROTEIN_KINASE_ST"/>
    <property type="match status" value="1"/>
</dbReference>
<name>CDK9_HUMAN</name>
<accession>P50750</accession>
<accession>Q5JU24</accession>
<accession>Q5JU25</accession>
<accession>Q5U006</accession>
<accession>Q96TF1</accession>
<organism>
    <name type="scientific">Homo sapiens</name>
    <name type="common">Human</name>
    <dbReference type="NCBI Taxonomy" id="9606"/>
    <lineage>
        <taxon>Eukaryota</taxon>
        <taxon>Metazoa</taxon>
        <taxon>Chordata</taxon>
        <taxon>Craniata</taxon>
        <taxon>Vertebrata</taxon>
        <taxon>Euteleostomi</taxon>
        <taxon>Mammalia</taxon>
        <taxon>Eutheria</taxon>
        <taxon>Euarchontoglires</taxon>
        <taxon>Primates</taxon>
        <taxon>Haplorrhini</taxon>
        <taxon>Catarrhini</taxon>
        <taxon>Hominidae</taxon>
        <taxon>Homo</taxon>
    </lineage>
</organism>
<evidence type="ECO:0000250" key="1">
    <source>
        <dbReference type="UniProtKB" id="Q99J95"/>
    </source>
</evidence>
<evidence type="ECO:0000255" key="2">
    <source>
        <dbReference type="PROSITE-ProRule" id="PRU00159"/>
    </source>
</evidence>
<evidence type="ECO:0000255" key="3">
    <source>
        <dbReference type="PROSITE-ProRule" id="PRU10027"/>
    </source>
</evidence>
<evidence type="ECO:0000256" key="4">
    <source>
        <dbReference type="SAM" id="MobiDB-lite"/>
    </source>
</evidence>
<evidence type="ECO:0000269" key="5">
    <source>
    </source>
</evidence>
<evidence type="ECO:0000269" key="6">
    <source>
    </source>
</evidence>
<evidence type="ECO:0000269" key="7">
    <source>
    </source>
</evidence>
<evidence type="ECO:0000269" key="8">
    <source>
    </source>
</evidence>
<evidence type="ECO:0000269" key="9">
    <source>
    </source>
</evidence>
<evidence type="ECO:0000269" key="10">
    <source>
    </source>
</evidence>
<evidence type="ECO:0000269" key="11">
    <source>
    </source>
</evidence>
<evidence type="ECO:0000269" key="12">
    <source>
    </source>
</evidence>
<evidence type="ECO:0000269" key="13">
    <source>
    </source>
</evidence>
<evidence type="ECO:0000269" key="14">
    <source>
    </source>
</evidence>
<evidence type="ECO:0000269" key="15">
    <source>
    </source>
</evidence>
<evidence type="ECO:0000269" key="16">
    <source>
    </source>
</evidence>
<evidence type="ECO:0000269" key="17">
    <source>
    </source>
</evidence>
<evidence type="ECO:0000269" key="18">
    <source>
    </source>
</evidence>
<evidence type="ECO:0000269" key="19">
    <source>
    </source>
</evidence>
<evidence type="ECO:0000269" key="20">
    <source>
    </source>
</evidence>
<evidence type="ECO:0000269" key="21">
    <source>
    </source>
</evidence>
<evidence type="ECO:0000269" key="22">
    <source>
    </source>
</evidence>
<evidence type="ECO:0000269" key="23">
    <source>
    </source>
</evidence>
<evidence type="ECO:0000269" key="24">
    <source>
    </source>
</evidence>
<evidence type="ECO:0000269" key="25">
    <source>
    </source>
</evidence>
<evidence type="ECO:0000269" key="26">
    <source>
    </source>
</evidence>
<evidence type="ECO:0000269" key="27">
    <source>
    </source>
</evidence>
<evidence type="ECO:0000269" key="28">
    <source>
    </source>
</evidence>
<evidence type="ECO:0000269" key="29">
    <source>
    </source>
</evidence>
<evidence type="ECO:0000269" key="30">
    <source>
    </source>
</evidence>
<evidence type="ECO:0000269" key="31">
    <source>
    </source>
</evidence>
<evidence type="ECO:0000269" key="32">
    <source>
    </source>
</evidence>
<evidence type="ECO:0000269" key="33">
    <source>
    </source>
</evidence>
<evidence type="ECO:0000269" key="34">
    <source>
    </source>
</evidence>
<evidence type="ECO:0000269" key="35">
    <source>
    </source>
</evidence>
<evidence type="ECO:0000269" key="36">
    <source>
    </source>
</evidence>
<evidence type="ECO:0000269" key="37">
    <source>
    </source>
</evidence>
<evidence type="ECO:0000269" key="38">
    <source>
    </source>
</evidence>
<evidence type="ECO:0000269" key="39">
    <source>
    </source>
</evidence>
<evidence type="ECO:0000269" key="40">
    <source>
    </source>
</evidence>
<evidence type="ECO:0000269" key="41">
    <source>
    </source>
</evidence>
<evidence type="ECO:0000269" key="42">
    <source>
    </source>
</evidence>
<evidence type="ECO:0000269" key="43">
    <source>
    </source>
</evidence>
<evidence type="ECO:0000269" key="44">
    <source>
    </source>
</evidence>
<evidence type="ECO:0000269" key="45">
    <source>
    </source>
</evidence>
<evidence type="ECO:0000269" key="46">
    <source>
    </source>
</evidence>
<evidence type="ECO:0000269" key="47">
    <source>
    </source>
</evidence>
<evidence type="ECO:0000269" key="48">
    <source>
    </source>
</evidence>
<evidence type="ECO:0000269" key="49">
    <source>
    </source>
</evidence>
<evidence type="ECO:0000269" key="50">
    <source>
    </source>
</evidence>
<evidence type="ECO:0000269" key="51">
    <source>
    </source>
</evidence>
<evidence type="ECO:0000269" key="52">
    <source>
    </source>
</evidence>
<evidence type="ECO:0000269" key="53">
    <source>
    </source>
</evidence>
<evidence type="ECO:0000269" key="54">
    <source>
    </source>
</evidence>
<evidence type="ECO:0000269" key="55">
    <source>
    </source>
</evidence>
<evidence type="ECO:0000269" key="56">
    <source>
    </source>
</evidence>
<evidence type="ECO:0000269" key="57">
    <source>
    </source>
</evidence>
<evidence type="ECO:0000269" key="58">
    <source>
    </source>
</evidence>
<evidence type="ECO:0000269" key="59">
    <source>
    </source>
</evidence>
<evidence type="ECO:0000269" key="60">
    <source>
    </source>
</evidence>
<evidence type="ECO:0000269" key="61">
    <source>
    </source>
</evidence>
<evidence type="ECO:0000269" key="62">
    <source>
    </source>
</evidence>
<evidence type="ECO:0000269" key="63">
    <source>
    </source>
</evidence>
<evidence type="ECO:0000303" key="64">
    <source>
    </source>
</evidence>
<evidence type="ECO:0000303" key="65">
    <source>
    </source>
</evidence>
<evidence type="ECO:0000305" key="66"/>
<evidence type="ECO:0000305" key="67">
    <source>
    </source>
</evidence>
<evidence type="ECO:0000305" key="68">
    <source>
    </source>
</evidence>
<evidence type="ECO:0000312" key="69">
    <source>
        <dbReference type="HGNC" id="HGNC:1780"/>
    </source>
</evidence>
<evidence type="ECO:0007744" key="70">
    <source>
    </source>
</evidence>
<evidence type="ECO:0007744" key="71">
    <source>
    </source>
</evidence>
<evidence type="ECO:0007744" key="72">
    <source>
    </source>
</evidence>
<evidence type="ECO:0007744" key="73">
    <source>
    </source>
</evidence>
<evidence type="ECO:0007829" key="74">
    <source>
        <dbReference type="PDB" id="3BLR"/>
    </source>
</evidence>
<evidence type="ECO:0007829" key="75">
    <source>
        <dbReference type="PDB" id="3LQ5"/>
    </source>
</evidence>
<evidence type="ECO:0007829" key="76">
    <source>
        <dbReference type="PDB" id="3MI9"/>
    </source>
</evidence>
<evidence type="ECO:0007829" key="77">
    <source>
        <dbReference type="PDB" id="3MY1"/>
    </source>
</evidence>
<evidence type="ECO:0007829" key="78">
    <source>
        <dbReference type="PDB" id="4OGR"/>
    </source>
</evidence>
<evidence type="ECO:0007829" key="79">
    <source>
        <dbReference type="PDB" id="6GZH"/>
    </source>
</evidence>
<reference key="1">
    <citation type="journal article" date="1994" name="Proc. Natl. Acad. Sci. U.S.A.">
        <title>PITALRE, a nuclear CDC2-related protein kinase that phosphorylates the retinoblastoma protein in vitro.</title>
        <authorList>
            <person name="Grana X."/>
            <person name="de Luca A."/>
            <person name="Sang N."/>
            <person name="Fu Y."/>
            <person name="Claudio P.P."/>
            <person name="Rosenblatt J."/>
            <person name="Morgan D.O."/>
            <person name="Giordano A."/>
        </authorList>
    </citation>
    <scope>NUCLEOTIDE SEQUENCE [MRNA] (ISOFORM 1)</scope>
</reference>
<reference key="2">
    <citation type="journal article" date="1995" name="Biochem. Biophys. Res. Commun.">
        <title>Cloning of a full-length cDNA sequence encoding a cdc2-related protein kinase from human endothelial cells.</title>
        <authorList>
            <person name="Best J.L."/>
            <person name="Presky D.H."/>
            <person name="Swerlick R.A."/>
            <person name="Burns D.K."/>
            <person name="Chu W."/>
        </authorList>
    </citation>
    <scope>NUCLEOTIDE SEQUENCE [MRNA] (ISOFORM 1)</scope>
    <scope>VARIANT ALA-231</scope>
</reference>
<reference key="3">
    <citation type="journal article" date="2000" name="Gene">
        <title>Genomic organization and characterization of promoter function of the human CDK9 gene.</title>
        <authorList>
            <person name="Liu H."/>
            <person name="Rice A.P."/>
        </authorList>
    </citation>
    <scope>NUCLEOTIDE SEQUENCE [GENOMIC DNA]</scope>
    <scope>VARIANT ALA-231</scope>
</reference>
<reference key="4">
    <citation type="submission" date="2004-10" db="EMBL/GenBank/DDBJ databases">
        <title>Cloning of human full-length CDSs in BD Creator(TM) system donor vector.</title>
        <authorList>
            <person name="Kalnine N."/>
            <person name="Chen X."/>
            <person name="Rolfs A."/>
            <person name="Halleck A."/>
            <person name="Hines L."/>
            <person name="Eisenstein S."/>
            <person name="Koundinya M."/>
            <person name="Raphael J."/>
            <person name="Moreira D."/>
            <person name="Kelley T."/>
            <person name="LaBaer J."/>
            <person name="Lin Y."/>
            <person name="Phelan M."/>
            <person name="Farmer A."/>
        </authorList>
    </citation>
    <scope>NUCLEOTIDE SEQUENCE [LARGE SCALE MRNA] (ISOFORM 1)</scope>
</reference>
<reference key="5">
    <citation type="submission" date="2002-06" db="EMBL/GenBank/DDBJ databases">
        <authorList>
            <consortium name="NIEHS SNPs program"/>
        </authorList>
    </citation>
    <scope>NUCLEOTIDE SEQUENCE [GENOMIC DNA]</scope>
</reference>
<reference key="6">
    <citation type="journal article" date="2004" name="Nature">
        <title>DNA sequence and analysis of human chromosome 9.</title>
        <authorList>
            <person name="Humphray S.J."/>
            <person name="Oliver K."/>
            <person name="Hunt A.R."/>
            <person name="Plumb R.W."/>
            <person name="Loveland J.E."/>
            <person name="Howe K.L."/>
            <person name="Andrews T.D."/>
            <person name="Searle S."/>
            <person name="Hunt S.E."/>
            <person name="Scott C.E."/>
            <person name="Jones M.C."/>
            <person name="Ainscough R."/>
            <person name="Almeida J.P."/>
            <person name="Ambrose K.D."/>
            <person name="Ashwell R.I.S."/>
            <person name="Babbage A.K."/>
            <person name="Babbage S."/>
            <person name="Bagguley C.L."/>
            <person name="Bailey J."/>
            <person name="Banerjee R."/>
            <person name="Barker D.J."/>
            <person name="Barlow K.F."/>
            <person name="Bates K."/>
            <person name="Beasley H."/>
            <person name="Beasley O."/>
            <person name="Bird C.P."/>
            <person name="Bray-Allen S."/>
            <person name="Brown A.J."/>
            <person name="Brown J.Y."/>
            <person name="Burford D."/>
            <person name="Burrill W."/>
            <person name="Burton J."/>
            <person name="Carder C."/>
            <person name="Carter N.P."/>
            <person name="Chapman J.C."/>
            <person name="Chen Y."/>
            <person name="Clarke G."/>
            <person name="Clark S.Y."/>
            <person name="Clee C.M."/>
            <person name="Clegg S."/>
            <person name="Collier R.E."/>
            <person name="Corby N."/>
            <person name="Crosier M."/>
            <person name="Cummings A.T."/>
            <person name="Davies J."/>
            <person name="Dhami P."/>
            <person name="Dunn M."/>
            <person name="Dutta I."/>
            <person name="Dyer L.W."/>
            <person name="Earthrowl M.E."/>
            <person name="Faulkner L."/>
            <person name="Fleming C.J."/>
            <person name="Frankish A."/>
            <person name="Frankland J.A."/>
            <person name="French L."/>
            <person name="Fricker D.G."/>
            <person name="Garner P."/>
            <person name="Garnett J."/>
            <person name="Ghori J."/>
            <person name="Gilbert J.G.R."/>
            <person name="Glison C."/>
            <person name="Grafham D.V."/>
            <person name="Gribble S."/>
            <person name="Griffiths C."/>
            <person name="Griffiths-Jones S."/>
            <person name="Grocock R."/>
            <person name="Guy J."/>
            <person name="Hall R.E."/>
            <person name="Hammond S."/>
            <person name="Harley J.L."/>
            <person name="Harrison E.S.I."/>
            <person name="Hart E.A."/>
            <person name="Heath P.D."/>
            <person name="Henderson C.D."/>
            <person name="Hopkins B.L."/>
            <person name="Howard P.J."/>
            <person name="Howden P.J."/>
            <person name="Huckle E."/>
            <person name="Johnson C."/>
            <person name="Johnson D."/>
            <person name="Joy A.A."/>
            <person name="Kay M."/>
            <person name="Keenan S."/>
            <person name="Kershaw J.K."/>
            <person name="Kimberley A.M."/>
            <person name="King A."/>
            <person name="Knights A."/>
            <person name="Laird G.K."/>
            <person name="Langford C."/>
            <person name="Lawlor S."/>
            <person name="Leongamornlert D.A."/>
            <person name="Leversha M."/>
            <person name="Lloyd C."/>
            <person name="Lloyd D.M."/>
            <person name="Lovell J."/>
            <person name="Martin S."/>
            <person name="Mashreghi-Mohammadi M."/>
            <person name="Matthews L."/>
            <person name="McLaren S."/>
            <person name="McLay K.E."/>
            <person name="McMurray A."/>
            <person name="Milne S."/>
            <person name="Nickerson T."/>
            <person name="Nisbett J."/>
            <person name="Nordsiek G."/>
            <person name="Pearce A.V."/>
            <person name="Peck A.I."/>
            <person name="Porter K.M."/>
            <person name="Pandian R."/>
            <person name="Pelan S."/>
            <person name="Phillimore B."/>
            <person name="Povey S."/>
            <person name="Ramsey Y."/>
            <person name="Rand V."/>
            <person name="Scharfe M."/>
            <person name="Sehra H.K."/>
            <person name="Shownkeen R."/>
            <person name="Sims S.K."/>
            <person name="Skuce C.D."/>
            <person name="Smith M."/>
            <person name="Steward C.A."/>
            <person name="Swarbreck D."/>
            <person name="Sycamore N."/>
            <person name="Tester J."/>
            <person name="Thorpe A."/>
            <person name="Tracey A."/>
            <person name="Tromans A."/>
            <person name="Thomas D.W."/>
            <person name="Wall M."/>
            <person name="Wallis J.M."/>
            <person name="West A.P."/>
            <person name="Whitehead S.L."/>
            <person name="Willey D.L."/>
            <person name="Williams S.A."/>
            <person name="Wilming L."/>
            <person name="Wray P.W."/>
            <person name="Young L."/>
            <person name="Ashurst J.L."/>
            <person name="Coulson A."/>
            <person name="Blocker H."/>
            <person name="Durbin R.M."/>
            <person name="Sulston J.E."/>
            <person name="Hubbard T."/>
            <person name="Jackson M.J."/>
            <person name="Bentley D.R."/>
            <person name="Beck S."/>
            <person name="Rogers J."/>
            <person name="Dunham I."/>
        </authorList>
    </citation>
    <scope>NUCLEOTIDE SEQUENCE [LARGE SCALE GENOMIC DNA]</scope>
</reference>
<reference key="7">
    <citation type="journal article" date="2004" name="Genome Res.">
        <title>The status, quality, and expansion of the NIH full-length cDNA project: the Mammalian Gene Collection (MGC).</title>
        <authorList>
            <consortium name="The MGC Project Team"/>
        </authorList>
    </citation>
    <scope>NUCLEOTIDE SEQUENCE [LARGE SCALE MRNA] (ISOFORM 1)</scope>
    <source>
        <tissue>Cervix</tissue>
    </source>
</reference>
<reference key="8">
    <citation type="journal article" date="1998" name="Cell">
        <title>A novel CDK9-associated C-type cyclin interacts directly with HIV-1 Tat and mediates its high-affinity, loop-specific binding to TAR RNA.</title>
        <authorList>
            <person name="Wei P."/>
            <person name="Garber M.E."/>
            <person name="Fang S.-M."/>
            <person name="Fischer W.H."/>
            <person name="Jones K.A."/>
        </authorList>
    </citation>
    <scope>INTERACTION WITH HIV TAT</scope>
</reference>
<reference key="9">
    <citation type="journal article" date="1998" name="EMBO J.">
        <title>Evidence that P-TEFb alleviates the negative effect of DSIF on RNA polymerase II-dependent transcription in vitro.</title>
        <authorList>
            <person name="Wada T."/>
            <person name="Takagi T."/>
            <person name="Yamaguchi Y."/>
            <person name="Watanabe D."/>
            <person name="Handa H."/>
        </authorList>
    </citation>
    <scope>FUNCTION</scope>
</reference>
<reference key="10">
    <citation type="journal article" date="1998" name="Genes Dev.">
        <title>Identification of multiple cyclin subunits of human P-TEFb.</title>
        <authorList>
            <person name="Peng J.-M."/>
            <person name="Zhu Y."/>
            <person name="Milton J.T."/>
            <person name="Price D.H."/>
        </authorList>
    </citation>
    <scope>IDENTIFICATION IN A COMPLEX WITH CCNT1 AND CCNT2</scope>
</reference>
<reference key="11">
    <citation type="journal article" date="1999" name="EMBO J.">
        <title>A novel RNA polymerase II-containing complex potentiates Tat-enhanced HIV-1 transcription.</title>
        <authorList>
            <person name="Parada C.A."/>
            <person name="Roeder R.G."/>
        </authorList>
    </citation>
    <scope>FUNCTION</scope>
    <scope>IDENTIFICATION IN A COMPLEX WITH HTATSF1; CCNT1; RNA POL II; SUPT5H AND NCL</scope>
</reference>
<reference key="12">
    <citation type="journal article" date="1999" name="J. Biol. Chem.">
        <title>Cyclin K functions as a CDK9 regulatory subunit and participates in RNA polymerase II transcription.</title>
        <authorList>
            <person name="Fu T.J."/>
            <person name="Peng J."/>
            <person name="Lee G."/>
            <person name="Price D.H."/>
            <person name="Flores O."/>
        </authorList>
    </citation>
    <scope>FUNCTION</scope>
    <scope>INTERACTION WITH CCNK</scope>
</reference>
<reference key="13">
    <citation type="journal article" date="2000" name="Mol. Cell">
        <title>FACT relieves DSIF/NELF-mediated inhibition of transcriptional elongation and reveals functional differences between P-TEFb and TFIIH.</title>
        <authorList>
            <person name="Wada T."/>
            <person name="Orphanides G."/>
            <person name="Hasegawa J."/>
            <person name="Kim D.-K."/>
            <person name="Shima D."/>
            <person name="Yamaguchi Y."/>
            <person name="Fukuda A."/>
            <person name="Hisatake K."/>
            <person name="Oh S."/>
            <person name="Reinberg D."/>
            <person name="Handa H."/>
        </authorList>
    </citation>
    <scope>FUNCTION</scope>
</reference>
<reference key="14">
    <citation type="journal article" date="2000" name="Mol. Cell. Biol.">
        <title>Domains in the SPT5 protein that modulate its transcriptional regulatory properties.</title>
        <authorList>
            <person name="Ivanov D."/>
            <person name="Kwak Y.T."/>
            <person name="Guo J."/>
            <person name="Gaynor R.B."/>
        </authorList>
    </citation>
    <scope>FUNCTION</scope>
</reference>
<reference key="15">
    <citation type="journal article" date="2000" name="Mol. Cell. Biol.">
        <title>CDK9 autophosphorylation regulates high-affinity binding of the human immunodeficiency virus type 1 tat-P-TEFb complex to TAR RNA.</title>
        <authorList>
            <person name="Garber M.E."/>
            <person name="Mayall T.P."/>
            <person name="Suess E.M."/>
            <person name="Meisenhelder J."/>
            <person name="Thompson N.E."/>
            <person name="Jones K.A."/>
        </authorList>
    </citation>
    <scope>PHOSPHORYLATION BY PKA</scope>
    <scope>AUTOPHOSPHORYLATION</scope>
    <scope>PHOSPHORYLATION AT SER-347; THR-350; SER-353; THR-354 AND SER-357</scope>
    <scope>INTERACTION WITH HIV TAT</scope>
    <scope>MUTAGENESIS OF 347-SER--SER-357 AND ASP-167</scope>
</reference>
<reference key="16">
    <citation type="journal article" date="2001" name="J. Biol. Chem.">
        <title>Positive transcription elongation factor B phosphorylates hSPT5 and RNA polymerase II carboxyl-terminal domain independently of cyclin-dependent kinase-activating kinase.</title>
        <authorList>
            <person name="Kim J.B."/>
            <person name="Sharp P.A."/>
        </authorList>
    </citation>
    <scope>FUNCTION</scope>
    <scope>MUTAGENESIS OF ASP-167 AND THR-186</scope>
</reference>
<reference key="17">
    <citation type="journal article" date="2001" name="J. Biol. Chem.">
        <title>DSIF and NELF interact with RNA polymerase II elongation complex and HIV-1 Tat stimulates P-TEFb-mediated phosphorylation of RNA polymerase II and DSIF during transcription elongation.</title>
        <authorList>
            <person name="Ping Y.-H."/>
            <person name="Rana T.M."/>
        </authorList>
    </citation>
    <scope>FUNCTION</scope>
</reference>
<reference key="18">
    <citation type="journal article" date="2001" name="J. Mol. Biol.">
        <title>The peptidyl-prolyl isomerase Pin1 interacts with hSpt5 phosphorylated by Cdk9.</title>
        <authorList>
            <person name="Lavoie S.B."/>
            <person name="Albert A.L."/>
            <person name="Handa H."/>
            <person name="Vincent M."/>
            <person name="Bensaude O."/>
        </authorList>
    </citation>
    <scope>FUNCTION</scope>
</reference>
<reference key="19">
    <citation type="journal article" date="2002" name="J. Biol. Chem.">
        <title>P-TEFb containing cyclin K and Cdk9 can activate transcription via RNA.</title>
        <authorList>
            <person name="Lin X."/>
            <person name="Taube R."/>
            <person name="Fujinaga K."/>
            <person name="Peterlin B.M."/>
        </authorList>
    </citation>
    <scope>FUNCTION</scope>
    <scope>INTERACTION WITH CCNK/CYCLIN K</scope>
</reference>
<reference key="20">
    <citation type="journal article" date="2002" name="J. Biomed. Sci.">
        <title>MCEF, the newest member of the AF4 family of transcription factors involved in leukemia, is a positive transcription elongation factor-b-associated protein.</title>
        <authorList>
            <person name="Estable M.C."/>
            <person name="Naghavi M.H."/>
            <person name="Kato H."/>
            <person name="Xiao H."/>
            <person name="Qin J."/>
            <person name="Vahlne A."/>
            <person name="Roeder R.G."/>
        </authorList>
    </citation>
    <scope>INTERACTION WITH AFF4</scope>
</reference>
<reference key="21">
    <citation type="journal article" date="2002" name="J. Cell. Physiol.">
        <title>CDK9 has the intrinsic property to shuttle between nucleus and cytoplasm, and enhanced expression of cyclin T1 promotes its nuclear localization.</title>
        <authorList>
            <person name="Napolitano G."/>
            <person name="Licciardo P."/>
            <person name="Carbone R."/>
            <person name="Majello B."/>
            <person name="Lania L."/>
        </authorList>
    </citation>
    <scope>SUBCELLULAR LOCATION</scope>
</reference>
<reference key="22">
    <citation type="journal article" date="2002" name="Mol. Cell. Biol.">
        <title>Spt5 cooperates with human immunodeficiency virus type 1 Tat by preventing premature RNA release at terminator sequences.</title>
        <authorList>
            <person name="Bourgeois C.F."/>
            <person name="Kim Y.K."/>
            <person name="Churcher M.J."/>
            <person name="West M.J."/>
            <person name="Karn J."/>
        </authorList>
    </citation>
    <scope>FUNCTION</scope>
</reference>
<reference key="23">
    <citation type="journal article" date="2002" name="Oncogene">
        <title>Activation of MyoD-dependent transcription by cdk9/cyclin T2.</title>
        <authorList>
            <person name="Simone C."/>
            <person name="Stiegler P."/>
            <person name="Bagella L."/>
            <person name="Pucci B."/>
            <person name="Bellan C."/>
            <person name="De Falco G."/>
            <person name="De Luca A."/>
            <person name="Guanti G."/>
            <person name="Puri P.L."/>
            <person name="Giordano A."/>
        </authorList>
    </citation>
    <scope>FUNCTION AS MYOD1 KINASE</scope>
    <scope>CATALYTIC ACTIVITY</scope>
    <scope>INTERACTION WITH MYOD1 AND CCNT2</scope>
</reference>
<reference key="24">
    <citation type="journal article" date="2003" name="Mol. Cell">
        <title>Methylation of SPT5 regulates its interaction with RNA polymerase II and transcriptional elongation properties.</title>
        <authorList>
            <person name="Kwak Y.T."/>
            <person name="Guo J."/>
            <person name="Prajapati S."/>
            <person name="Park K.-J."/>
            <person name="Surabhi R.M."/>
            <person name="Miller B."/>
            <person name="Gehrig P."/>
            <person name="Gaynor R.B."/>
        </authorList>
    </citation>
    <scope>INTERACTION WITH SUPT5H</scope>
</reference>
<reference key="25">
    <citation type="journal article" date="2004" name="J. Virol.">
        <title>Coordination of transcription factor phosphorylation and histone methylation by the P-TEFb kinase during human immunodeficiency virus type 1 transcription.</title>
        <authorList>
            <person name="Zhou M."/>
            <person name="Deng L."/>
            <person name="Lacoste V."/>
            <person name="Park H.U."/>
            <person name="Pumfery A."/>
            <person name="Kashanchi F."/>
            <person name="Brady J.N."/>
            <person name="Kumar A."/>
        </authorList>
    </citation>
    <scope>FUNCTION</scope>
</reference>
<reference key="26">
    <citation type="journal article" date="2004" name="Mol. Cell. Biol.">
        <title>Dynamics of human immunodeficiency virus transcription: P-TEFb phosphorylates RD and dissociates negative effectors from the transactivation response element.</title>
        <authorList>
            <person name="Fujinaga K."/>
            <person name="Irwin D."/>
            <person name="Huang Y."/>
            <person name="Taube R."/>
            <person name="Kurosu T."/>
            <person name="Peterlin B.M."/>
        </authorList>
    </citation>
    <scope>FUNCTION</scope>
</reference>
<reference key="27">
    <citation type="journal article" date="2005" name="J. Biol. Chem.">
        <title>Analysis of the large inactive P-TEFb complex indicates that it contains one 7SK molecule, a dimer of HEXIM1 or HEXIM2, and two P-TEFb molecules containing Cdk9 phosphorylated at threonine 186.</title>
        <authorList>
            <person name="Li Q."/>
            <person name="Price J.P."/>
            <person name="Byers S.A."/>
            <person name="Cheng D."/>
            <person name="Peng J."/>
            <person name="Price D.H."/>
        </authorList>
    </citation>
    <scope>IDENTIFICATION IN INACTIVE 7SK SNRNP COMPLEX</scope>
    <scope>PHOSPHORYLATION AT THR-186</scope>
</reference>
<reference key="28">
    <citation type="journal article" date="2005" name="Mol. Cell">
        <title>The bromodomain protein Brd4 is a positive regulatory component of P-TEFb and stimulates RNA polymerase II-dependent transcription.</title>
        <authorList>
            <person name="Jang M.K."/>
            <person name="Mochizuki K."/>
            <person name="Zhou M."/>
            <person name="Jeong H.S."/>
            <person name="Brady J.N."/>
            <person name="Ozato K."/>
        </authorList>
    </citation>
    <scope>FUNCTION</scope>
    <scope>INTERACTION WITH BRD4</scope>
</reference>
<reference key="29">
    <citation type="journal article" date="2005" name="Mol. Cell">
        <title>Recruitment of P-TEFb for stimulation of transcriptional elongation by the bromodomain protein Brd4.</title>
        <authorList>
            <person name="Yang Z."/>
            <person name="Yik J.H."/>
            <person name="Chen R."/>
            <person name="He N."/>
            <person name="Jang M.K."/>
            <person name="Ozato K."/>
            <person name="Zhou Q."/>
        </authorList>
    </citation>
    <scope>FUNCTION</scope>
    <scope>INTERACTION WITH BRD4</scope>
</reference>
<reference key="30">
    <citation type="journal article" date="2006" name="Mol. Cell">
        <title>P-TEFb-mediated phosphorylation of hSpt5 C-terminal repeats is critical for processive transcription elongation.</title>
        <authorList>
            <person name="Yamada T."/>
            <person name="Yamaguchi Y."/>
            <person name="Inukai N."/>
            <person name="Okamoto S."/>
            <person name="Mura T."/>
            <person name="Handa H."/>
        </authorList>
    </citation>
    <scope>FUNCTION</scope>
    <scope>CATALYTIC ACTIVITY</scope>
</reference>
<reference key="31">
    <citation type="journal article" date="2007" name="J. Biol. Chem.">
        <title>The functional role of an interleukin 6-inducible CDK9.STAT3 complex in human gamma-fibrinogen gene expression.</title>
        <authorList>
            <person name="Hou T."/>
            <person name="Ray S."/>
            <person name="Brasier A.R."/>
        </authorList>
    </citation>
    <scope>FUNCTION IN CYTOKINE SIGNALING</scope>
    <scope>INTERACTION WITH STAT3</scope>
</reference>
<reference key="32">
    <citation type="journal article" date="2007" name="Mol. Cell">
        <title>Systematic analysis of the protein interaction network for the human transcription machinery reveals the identity of the 7SK capping enzyme.</title>
        <authorList>
            <person name="Jeronimo C."/>
            <person name="Forget D."/>
            <person name="Bouchard A."/>
            <person name="Li Q."/>
            <person name="Chua G."/>
            <person name="Poitras C."/>
            <person name="Therien C."/>
            <person name="Bergeron D."/>
            <person name="Bourassa S."/>
            <person name="Greenblatt J."/>
            <person name="Chabot B."/>
            <person name="Poirier G.G."/>
            <person name="Hughes T.R."/>
            <person name="Blanchette M."/>
            <person name="Price D.H."/>
            <person name="Coulombe B."/>
        </authorList>
    </citation>
    <scope>IDENTIFICATION IN THE 7SK SNRNP COMPLEX</scope>
</reference>
<reference key="33">
    <citation type="journal article" date="2007" name="Mol. Cell. Biol.">
        <title>Regulation of P-TEFb elongation complex activity by CDK9 acetylation.</title>
        <authorList>
            <person name="Fu J."/>
            <person name="Yoon H.-G."/>
            <person name="Qin J."/>
            <person name="Wong J."/>
        </authorList>
    </citation>
    <scope>ACETYLATION AT LYS-44</scope>
    <scope>IDENTIFICATION IN COMPLEX WITH NCOR1; HEXIM1 AND HDAC3</scope>
    <scope>MUTAGENESIS OF LYS-44</scope>
</reference>
<reference key="34">
    <citation type="journal article" date="2008" name="Genes Dev.">
        <title>PP2B and PP1alpha cooperatively disrupt 7SK snRNP to release P-TEFb for transcription in response to Ca2+ signaling.</title>
        <authorList>
            <person name="Chen R."/>
            <person name="Liu M."/>
            <person name="Li H."/>
            <person name="Xue Y."/>
            <person name="Ramey W.N."/>
            <person name="He N."/>
            <person name="Ai N."/>
            <person name="Luo H."/>
            <person name="Zhu Y."/>
            <person name="Zhou N."/>
            <person name="Zhou Q."/>
        </authorList>
    </citation>
    <scope>PHOSPHORYLATION AT THR-186</scope>
    <scope>DEPHOSPHORYLATION BY PPP1CA</scope>
    <scope>P-TEFB/7SK SNRNP COMPLEX</scope>
    <scope>SUBUNIT</scope>
    <scope>INTERACTION WITH BRD4</scope>
    <scope>ACTIVITY REGULATION</scope>
</reference>
<reference key="35">
    <citation type="journal article" date="2008" name="J. Biol. Chem.">
        <title>Phosphatase PPM1A regulates phosphorylation of Thr-186 in the Cdk9 T-loop.</title>
        <authorList>
            <person name="Wang Y."/>
            <person name="Dow E.C."/>
            <person name="Liang Y.Y."/>
            <person name="Ramakrishnan R."/>
            <person name="Liu H."/>
            <person name="Sung T.L."/>
            <person name="Lin X."/>
            <person name="Rice A.P."/>
        </authorList>
    </citation>
    <scope>PHOSPHORYLATION AT THR-186</scope>
    <scope>DEPHOSPHORYLATION BY PPM1A AND PPM1B</scope>
</reference>
<reference key="36">
    <citation type="journal article" date="2008" name="Mol. Cell">
        <title>A La-related protein modulates 7SK snRNP integrity to suppress P-TEFb-dependent transcriptional elongation and tumorigenesis.</title>
        <authorList>
            <person name="He N."/>
            <person name="Jahchan N.S."/>
            <person name="Hong E."/>
            <person name="Li Q."/>
            <person name="Bayfield M.A."/>
            <person name="Maraia R.J."/>
            <person name="Luo K."/>
            <person name="Zhou Q."/>
        </authorList>
    </citation>
    <scope>IDENTIFICATION IN COMPLEX WITH LARP7 IN 7SK SNRNP COMPLEX</scope>
</reference>
<reference key="37">
    <citation type="journal article" date="2008" name="Mol. Cell">
        <title>Kinase-selective enrichment enables quantitative phosphoproteomics of the kinome across the cell cycle.</title>
        <authorList>
            <person name="Daub H."/>
            <person name="Olsen J.V."/>
            <person name="Bairlein M."/>
            <person name="Gnad F."/>
            <person name="Oppermann F.S."/>
            <person name="Korner R."/>
            <person name="Greff Z."/>
            <person name="Keri G."/>
            <person name="Stemmann O."/>
            <person name="Mann M."/>
        </authorList>
    </citation>
    <scope>PHOSPHORYLATION [LARGE SCALE ANALYSIS] AT SER-347</scope>
    <scope>PHOSPHORYLATION [LARGE SCALE ANALYSIS] AT SER-35 (ISOFORM 2)</scope>
    <scope>IDENTIFICATION BY MASS SPECTROMETRY [LARGE SCALE ANALYSIS]</scope>
    <source>
        <tissue>Cervix carcinoma</tissue>
    </source>
</reference>
<reference key="38">
    <citation type="journal article" date="2008" name="Mol. Cell. Biol.">
        <title>Acetylation of conserved lysines in the catalytic core of cyclin-dependent kinase 9 inhibits kinase activity and regulates transcription.</title>
        <authorList>
            <person name="Sabo A."/>
            <person name="Lusic M."/>
            <person name="Cereseto A."/>
            <person name="Giacca M."/>
        </authorList>
    </citation>
    <scope>ACETYLATION AT LYS-44 AND LYS-48 BY PCAF/KAT2B AND GCN5/KAT2A</scope>
    <scope>ACTIVITY REGULATION BY ACETYLATION</scope>
    <scope>SUBCELLULAR LOCATION</scope>
</reference>
<reference key="39">
    <citation type="journal article" date="2008" name="Mol. Cell. Biol.">
        <title>RelA Ser276 phosphorylation is required for activation of a subset of NF-kappaB-dependent genes by recruiting cyclin-dependent kinase 9/cyclin T1 complexes.</title>
        <authorList>
            <person name="Nowak D.E."/>
            <person name="Tian B."/>
            <person name="Jamaluddin M."/>
            <person name="Boldogh I."/>
            <person name="Vergara L.A."/>
            <person name="Choudhary S."/>
            <person name="Brasier A.R."/>
        </authorList>
    </citation>
    <scope>FUNCTION IN CYTOKINE SIGNALING</scope>
    <scope>INTERACTION WITH RELA/P65</scope>
</reference>
<reference key="40">
    <citation type="journal article" date="2009" name="Cell Cycle">
        <title>Insights into the function of the human P-TEFb component CDK9 in the regulation of chromatin modifications and co-transcriptional mRNA processing.</title>
        <authorList>
            <person name="Pirngruber J."/>
            <person name="Shchebet A."/>
            <person name="Johnsen S.A."/>
        </authorList>
    </citation>
    <scope>FUNCTION IN HISTONE REGULATION</scope>
</reference>
<reference key="41">
    <citation type="journal article" date="2009" name="EMBO Rep.">
        <title>CDK9 directs H2B monoubiquitination and controls replication-dependent histone mRNA 3'-end processing.</title>
        <authorList>
            <person name="Pirngruber J."/>
            <person name="Shchebet A."/>
            <person name="Schreiber L."/>
            <person name="Shema E."/>
            <person name="Minsky N."/>
            <person name="Chapman R.D."/>
            <person name="Eick D."/>
            <person name="Aylon Y."/>
            <person name="Oren M."/>
            <person name="Johnsen S.A."/>
        </authorList>
    </citation>
    <scope>FUNCTION IN HISTONE H2B UBIQUITINATION</scope>
</reference>
<reference key="42">
    <citation type="journal article" date="2009" name="Mol. Cell. Proteomics">
        <title>Large-scale proteomics analysis of the human kinome.</title>
        <authorList>
            <person name="Oppermann F.S."/>
            <person name="Gnad F."/>
            <person name="Olsen J.V."/>
            <person name="Hornberger R."/>
            <person name="Greff Z."/>
            <person name="Keri G."/>
            <person name="Mann M."/>
            <person name="Daub H."/>
        </authorList>
    </citation>
    <scope>PHOSPHORYLATION [LARGE SCALE ANALYSIS] AT SER-347 AND THR-350</scope>
    <scope>PHOSPHORYLATION [LARGE SCALE ANALYSIS] AT SER-35 (ISOFORM 2)</scope>
    <scope>IDENTIFICATION BY MASS SPECTROMETRY [LARGE SCALE ANALYSIS]</scope>
</reference>
<reference key="43">
    <citation type="journal article" date="2010" name="Biochem. Biophys. Res. Commun.">
        <title>55K isoform of CDK9 associates with Ku70 and is involved in DNA repair.</title>
        <authorList>
            <person name="Liu H."/>
            <person name="Herrmann C.H."/>
            <person name="Chiang K."/>
            <person name="Sung T.L."/>
            <person name="Moon S.H."/>
            <person name="Donehower L.A."/>
            <person name="Rice A.P."/>
        </authorList>
    </citation>
    <scope>FUNCTION IN DNA REPAIR</scope>
    <scope>INTERACTION WITH KU70/XRCC6</scope>
</reference>
<reference key="44">
    <citation type="journal article" date="2010" name="EMBO Rep.">
        <title>Cyclin-dependent kinase 9-cyclin K functions in the replication stress response.</title>
        <authorList>
            <person name="Yu D.S."/>
            <person name="Zhao R."/>
            <person name="Hsu E.L."/>
            <person name="Cayer J."/>
            <person name="Ye F."/>
            <person name="Guo Y."/>
            <person name="Shyr Y."/>
            <person name="Cortez D."/>
        </authorList>
    </citation>
    <scope>FUNCTION IN CDK9/CYCLIN K COMPLEX DURING REPLICATION STRESS</scope>
</reference>
<reference key="45">
    <citation type="journal article" date="2010" name="J. Biol. Chem.">
        <title>Cyclin-dependent kinase-9 is a component of the p300/GATA4 complex required for phenylephrine-induced hypertrophy in cardiomyocytes.</title>
        <authorList>
            <person name="Sunagawa Y."/>
            <person name="Morimoto T."/>
            <person name="Takaya T."/>
            <person name="Kaichi S."/>
            <person name="Wada H."/>
            <person name="Kawamura T."/>
            <person name="Fujita M."/>
            <person name="Shimatsu A."/>
            <person name="Kita T."/>
            <person name="Hasegawa K."/>
        </authorList>
    </citation>
    <scope>FUNCTION IN CARDIAC HYPERTROPHY</scope>
    <scope>IDENTIFICATION IN COMPLEX WITH CCNT1/CYCLIN-T1; EP300 AND GATA4</scope>
</reference>
<reference key="46">
    <citation type="journal article" date="2010" name="Mol. Cell">
        <title>HIV-1 Tat and host AFF4 recruit two transcription elongation factors into a bifunctional complex for coordinated activation of HIV-1 transcription.</title>
        <authorList>
            <person name="He N."/>
            <person name="Liu M."/>
            <person name="Hsu J."/>
            <person name="Xue Y."/>
            <person name="Chou S."/>
            <person name="Burlingame A."/>
            <person name="Krogan N.J."/>
            <person name="Alber T."/>
            <person name="Zhou Q."/>
        </authorList>
    </citation>
    <scope>IDENTIFICATION IN THE SEC COMPLEX</scope>
</reference>
<reference key="47">
    <citation type="journal article" date="2010" name="Mol. Cell">
        <title>AFF4, a component of the ELL/P-TEFb elongation complex and a shared subunit of MLL chimeras, can link transcription elongation to leukemia.</title>
        <authorList>
            <person name="Lin C."/>
            <person name="Smith E.R."/>
            <person name="Takahashi H."/>
            <person name="Lai K.C."/>
            <person name="Martin-Brown S."/>
            <person name="Florens L."/>
            <person name="Washburn M.P."/>
            <person name="Conaway J.W."/>
            <person name="Conaway R.C."/>
            <person name="Shilatifard A."/>
        </authorList>
    </citation>
    <scope>IDENTIFICATION IN THE SEC COMPLEX</scope>
</reference>
<reference key="48">
    <citation type="journal article" date="2010" name="Mol. Endocrinol.">
        <title>CDK9 regulates AR promoter selectivity and cell growth through serine 81 phosphorylation.</title>
        <authorList>
            <person name="Gordon V."/>
            <person name="Bhadel S."/>
            <person name="Wunderlich W."/>
            <person name="Zhang J."/>
            <person name="Ficarro S.B."/>
            <person name="Mollah S.A."/>
            <person name="Shabanowitz J."/>
            <person name="Hunt D.F."/>
            <person name="Xenarios I."/>
            <person name="Hahn W.C."/>
            <person name="Conaway M."/>
            <person name="Carey M.F."/>
            <person name="Gioeli D."/>
        </authorList>
    </citation>
    <scope>FUNCTION IN AR KINASE</scope>
    <scope>CATALYTIC ACTIVITY</scope>
    <scope>INTERACTION WITH AR</scope>
</reference>
<reference key="49">
    <citation type="journal article" date="2011" name="BMC Syst. Biol.">
        <title>Initial characterization of the human central proteome.</title>
        <authorList>
            <person name="Burkard T.R."/>
            <person name="Planyavsky M."/>
            <person name="Kaupe I."/>
            <person name="Breitwieser F.P."/>
            <person name="Buerckstuemmer T."/>
            <person name="Bennett K.L."/>
            <person name="Superti-Furga G."/>
            <person name="Colinge J."/>
        </authorList>
    </citation>
    <scope>IDENTIFICATION BY MASS SPECTROMETRY [LARGE SCALE ANALYSIS]</scope>
</reference>
<reference key="50">
    <citation type="journal article" date="2011" name="Mol. Cell">
        <title>The little elongation complex regulates small nuclear RNA transcription.</title>
        <authorList>
            <person name="Smith E.R."/>
            <person name="Lin C."/>
            <person name="Garrett A.S."/>
            <person name="Thornton J."/>
            <person name="Mohaghegh N."/>
            <person name="Hu D."/>
            <person name="Jackson J."/>
            <person name="Saraf A."/>
            <person name="Swanson S.K."/>
            <person name="Seidel C."/>
            <person name="Florens L."/>
            <person name="Washburn M.P."/>
            <person name="Eissenberg J.C."/>
            <person name="Shilatifard A."/>
        </authorList>
    </citation>
    <scope>IDENTIFICATION IN THE SEC COMPLEX</scope>
</reference>
<reference key="51">
    <citation type="journal article" date="2011" name="Sci. Signal.">
        <title>System-wide temporal characterization of the proteome and phosphoproteome of human embryonic stem cell differentiation.</title>
        <authorList>
            <person name="Rigbolt K.T."/>
            <person name="Prokhorova T.A."/>
            <person name="Akimov V."/>
            <person name="Henningsen J."/>
            <person name="Johansen P.T."/>
            <person name="Kratchmarova I."/>
            <person name="Kassem M."/>
            <person name="Mann M."/>
            <person name="Olsen J.V."/>
            <person name="Blagoev B."/>
        </authorList>
    </citation>
    <scope>PHOSPHORYLATION [LARGE SCALE ANALYSIS] AT THR-186</scope>
    <scope>IDENTIFICATION BY MASS SPECTROMETRY [LARGE SCALE ANALYSIS]</scope>
</reference>
<reference key="52">
    <citation type="journal article" date="2012" name="Int. J. Cancer">
        <title>CDKI-71, a novel CDK9 inhibitor, is preferentially cytotoxic to cancer cells compared to flavopiridol.</title>
        <authorList>
            <person name="Liu X."/>
            <person name="Shi S."/>
            <person name="Lam F."/>
            <person name="Pepper C."/>
            <person name="Fischer P.M."/>
            <person name="Wang S."/>
        </authorList>
    </citation>
    <scope>ACTIVITY REGULATION BY CDKI-71</scope>
</reference>
<reference key="53">
    <citation type="journal article" date="2011" name="J. Biol. Chem.">
        <title>Transcription factor IIS cooperates with the E3 ligase UBR5 to ubiquitinate the CDK9 subunit of the positive transcription elongation factor B.</title>
        <authorList>
            <person name="Cojocaru M."/>
            <person name="Bouchard A."/>
            <person name="Cloutier P."/>
            <person name="Cooper J.J."/>
            <person name="Varzavand K."/>
            <person name="Price D.H."/>
            <person name="Coulombe B."/>
        </authorList>
    </citation>
    <scope>FUNCTION AS RPB1/POLR2A CTD KINASE</scope>
    <scope>CATALYTIC ACTIVITY</scope>
    <scope>POLYUBIQUITINATION BY UBR5</scope>
    <scope>INTERACTION WITH UBR5 AND TFIIS/TCEA1</scope>
</reference>
<reference key="54">
    <citation type="journal article" date="2012" name="J. Cell. Physiol.">
        <title>Cdk9 T-loop phosphorylation is regulated by the calcium signaling pathway.</title>
        <authorList>
            <person name="Ramakrishnan R."/>
            <person name="Rice A.P."/>
        </authorList>
    </citation>
    <scope>PHOSPHORYLATION AT THR-186</scope>
    <scope>ACTIVITY REGULATION</scope>
    <scope>DEGRADATION BY THE PROTEASOME</scope>
    <scope>MUTAGENESIS OF THR-186</scope>
</reference>
<reference key="55">
    <citation type="journal article" date="2011" name="PLoS ONE">
        <title>Protein phosphatase-1 activates CDK9 by dephosphorylating Ser175.</title>
        <authorList>
            <person name="Ammosova T."/>
            <person name="Obukhov Y."/>
            <person name="Kotelkin A."/>
            <person name="Breuer D."/>
            <person name="Beullens M."/>
            <person name="Gordeuk V.R."/>
            <person name="Bollen M."/>
            <person name="Nekhai S."/>
        </authorList>
    </citation>
    <scope>PHOSPHORYLATION AT SER-175</scope>
    <scope>DEPHOSPHORYLATION AT SER-175 BY PP1</scope>
    <scope>MUTAGENESIS OF SER-175</scope>
</reference>
<reference key="56">
    <citation type="journal article" date="2006" name="Mol. Cell">
        <title>Controlling the elongation phase of transcription with P-TEFb.</title>
        <authorList>
            <person name="Peterlin B.M."/>
            <person name="Price D.H."/>
        </authorList>
    </citation>
    <scope>REVIEW ON NELF AND DSIF KINASE ACTIVITY</scope>
</reference>
<reference key="57">
    <citation type="journal article" date="2008" name="Cell Cycle">
        <title>Expanding role of cyclin dependent kinases in cytokine inducible gene expression.</title>
        <authorList>
            <person name="Brasier A.R."/>
        </authorList>
    </citation>
    <scope>REVIEW ON CYTOKINE SIGNALING</scope>
</reference>
<reference key="58">
    <citation type="journal article" date="2008" name="Cell Cycle">
        <title>Role of the cyclin-dependent kinase 9-related pathway in mammalian gene expression and human diseases.</title>
        <authorList>
            <person name="Romano G."/>
            <person name="Giordano A."/>
        </authorList>
    </citation>
    <scope>REVIEW ON TRANSCRIPTION REGULATION</scope>
    <scope>INHIBITORS</scope>
</reference>
<reference key="59">
    <citation type="journal article" date="2008" name="Trends Pharmacol. Sci.">
        <title>Cyclin-dependent kinase 9: a key transcriptional regulator and potential drug target in oncology, virology and cardiology.</title>
        <authorList>
            <person name="Wang S."/>
            <person name="Fischer P.M."/>
        </authorList>
    </citation>
    <scope>REVIEW ON TRANSCRIPTION REGULATION</scope>
    <scope>INHIBITORS</scope>
</reference>
<reference key="60">
    <citation type="journal article" date="2009" name="Nat. Rev. Cancer">
        <title>Cell cycle, CDKs and cancer: a changing paradigm.</title>
        <authorList>
            <person name="Malumbres M."/>
            <person name="Barbacid M."/>
        </authorList>
    </citation>
    <scope>ACTIVITY REGULATION</scope>
    <scope>GENE FAMILY</scope>
</reference>
<reference key="61">
    <citation type="journal article" date="2010" name="Med. Res. Rev.">
        <title>Pharmacological targeting of CDK9 in cardiac hypertrophy.</title>
        <authorList>
            <person name="Krystof V."/>
            <person name="Chamrad I."/>
            <person name="Jorda R."/>
            <person name="Kohoutek J."/>
        </authorList>
    </citation>
    <scope>REVIEW ON CARDIAC HYPERTROPHY</scope>
    <scope>INHIBITORS</scope>
</reference>
<reference key="62">
    <citation type="journal article" date="2011" name="Cell Cycle">
        <title>A role for cdk9-cyclin k in maintaining genome integrity.</title>
        <authorList>
            <person name="Yu D.S."/>
            <person name="Cortez D."/>
        </authorList>
    </citation>
    <scope>REVIEW ON GENOME INTEGRITY MAINTENANCE</scope>
</reference>
<reference key="63">
    <citation type="journal article" date="2012" name="PLoS ONE">
        <title>Herpes simplex virus 1 ICP22 inhibits the transcription of viral gene promoters by binding to and blocking the recruitment of P-TEFb.</title>
        <authorList>
            <person name="Guo L."/>
            <person name="Wu W.J."/>
            <person name="Liu L.D."/>
            <person name="Wang L.C."/>
            <person name="Zhang Y."/>
            <person name="Wu L.Q."/>
            <person name="Guan Y."/>
            <person name="Li Q.H."/>
        </authorList>
    </citation>
    <scope>INTERACTION WITH HHV-1 TRANSCRIPTIONAL REGULATOR ICP22 (MICROBIAL INFECTION)</scope>
</reference>
<reference key="64">
    <citation type="journal article" date="2013" name="Cell">
        <title>Brd4 and JMJD6-associated anti-pause enhancers in regulation of transcriptional pause release.</title>
        <authorList>
            <person name="Liu W."/>
            <person name="Ma Q."/>
            <person name="Wong K."/>
            <person name="Li W."/>
            <person name="Ohgi K."/>
            <person name="Zhang J."/>
            <person name="Aggarwal A."/>
            <person name="Rosenfeld M.G."/>
        </authorList>
    </citation>
    <scope>INTERACTION WITH BRD4 AND JMJD6</scope>
</reference>
<reference key="65">
    <citation type="journal article" date="2014" name="J. Proteomics">
        <title>An enzyme assisted RP-RPLC approach for in-depth analysis of human liver phosphoproteome.</title>
        <authorList>
            <person name="Bian Y."/>
            <person name="Song C."/>
            <person name="Cheng K."/>
            <person name="Dong M."/>
            <person name="Wang F."/>
            <person name="Huang J."/>
            <person name="Sun D."/>
            <person name="Wang L."/>
            <person name="Ye M."/>
            <person name="Zou H."/>
        </authorList>
    </citation>
    <scope>PHOSPHORYLATION [LARGE SCALE ANALYSIS] AT SER-347</scope>
    <scope>PHOSPHORYLATION [LARGE SCALE ANALYSIS] AT THR-54 (ISOFORM 2)</scope>
    <scope>IDENTIFICATION BY MASS SPECTROMETRY [LARGE SCALE ANALYSIS]</scope>
    <source>
        <tissue>Liver</tissue>
    </source>
</reference>
<reference key="66">
    <citation type="journal article" date="2014" name="PLoS ONE">
        <title>Herpes Simplex Virus 1 (HSV-1) ICP22 protein directly interacts with cyclin-dependent kinase (CDK)9 to inhibit RNA polymerase II transcription elongation.</title>
        <authorList>
            <person name="Zaborowska J."/>
            <person name="Baumli S."/>
            <person name="Laitem C."/>
            <person name="O'Reilly D."/>
            <person name="Thomas P.H."/>
            <person name="O'Hare P."/>
            <person name="Murphy S."/>
        </authorList>
    </citation>
    <scope>INTERACTION WITH HHV-1 TRANSCRIPTIONAL REGULATOR ICP22 (MICROBIAL INFECTION)</scope>
</reference>
<reference key="67">
    <citation type="journal article" date="2016" name="Sci. Rep.">
        <title>Heat shock factor 1 mediates latent HIV reactivation.</title>
        <authorList>
            <person name="Pan X.Y."/>
            <person name="Zhao W."/>
            <person name="Zeng X.Y."/>
            <person name="Lin J."/>
            <person name="Li M.M."/>
            <person name="Shen X.T."/>
            <person name="Liu S.W."/>
        </authorList>
    </citation>
    <scope>INTERACTION WITH HSF1</scope>
</reference>
<reference key="68">
    <citation type="journal article" date="2017" name="Nucleic Acids Res.">
        <title>SIRT7-dependent deacetylation of CDK9 activates RNA polymerase II transcription.</title>
        <authorList>
            <person name="Blank M.F."/>
            <person name="Chen S."/>
            <person name="Poetz F."/>
            <person name="Schnoelzer M."/>
            <person name="Voit R."/>
            <person name="Grummt I."/>
        </authorList>
    </citation>
    <scope>FUNCTION</scope>
    <scope>CATALYTIC ACTIVITY</scope>
    <scope>ACETYLATION AT LYS-48</scope>
    <scope>DEACETYLATION BY SIRT7</scope>
    <scope>MUTAGENESIS OF LYS-48</scope>
</reference>
<reference key="69">
    <citation type="journal article" date="2018" name="Cell Rep.">
        <title>Positive Regulation of Transcription by Human ZMYND8 through Its Association with P-TEFb Complex.</title>
        <authorList>
            <person name="Ghosh K."/>
            <person name="Tang M."/>
            <person name="Kumari N."/>
            <person name="Nandy A."/>
            <person name="Basu S."/>
            <person name="Mall D.P."/>
            <person name="Rai K."/>
            <person name="Biswas D."/>
        </authorList>
    </citation>
    <scope>FUNCTION</scope>
    <scope>INTERACTION WITH HEXIM1; AFF4; MLLT3; ZMYND8 AND CCNT1</scope>
    <scope>IDENTIFICATION BY MASS SPECTROMETRY</scope>
</reference>
<reference key="70">
    <citation type="journal article" date="2018" name="EMBO Rep.">
        <title>CDK9-mediated phosphorylation controls the interaction of TIP60 with the transcriptional machinery.</title>
        <authorList>
            <person name="Brauns-Schubert P."/>
            <person name="Schubert F."/>
            <person name="Wissler M."/>
            <person name="Weiss M."/>
            <person name="Schlicher L."/>
            <person name="Bessler S."/>
            <person name="Safavi M."/>
            <person name="Miething C."/>
            <person name="Borner C."/>
            <person name="Brummer T."/>
            <person name="Maurer U."/>
        </authorList>
    </citation>
    <scope>FUNCTION</scope>
    <scope>CATALYTIC ACTIVITY</scope>
</reference>
<reference key="71">
    <citation type="journal article" date="2021" name="Vaccines (Basel)">
        <title>HSV-1 ICP22 Is a Selective Viral Repressor of Cellular RNA Polymerase II-Mediated Transcription Elongation.</title>
        <authorList>
            <person name="Isa N.F."/>
            <person name="Bensaude O."/>
            <person name="Aziz N.C."/>
            <person name="Murphy S."/>
        </authorList>
    </citation>
    <scope>INTERACTION WITH HHV-1 TRANSCRIPTIONAL REGULATOR ICP22 (MICROBIAL INFECTION)</scope>
</reference>
<reference key="72">
    <citation type="journal article" date="2024" name="Mol. Cell">
        <title>The PNUTS phosphatase complex controls transcription pause release.</title>
        <authorList>
            <person name="Kelley J.R."/>
            <person name="Dimitrova E."/>
            <person name="Maciuszek M."/>
            <person name="Nguyen H.T."/>
            <person name="Szczurek A.T."/>
            <person name="Hughes A.L."/>
            <person name="Blackledge N.P."/>
            <person name="Kettenbach A.N."/>
            <person name="Klose R.J."/>
        </authorList>
    </citation>
    <scope>PHOSPHORYLATION AT SER-347</scope>
    <scope>DEPHOSPHORYLATION AT SER-347</scope>
</reference>
<reference key="73">
    <citation type="journal article" date="2010" name="Nature">
        <title>Crystal structure of HIV-1 Tat complexed with human P-TEFb.</title>
        <authorList>
            <person name="Tahirov T.H."/>
            <person name="Babayeva N.D."/>
            <person name="Varzavand K."/>
            <person name="Cooper J.J."/>
            <person name="Sedore S.C."/>
            <person name="Price D.H."/>
        </authorList>
    </citation>
    <scope>X-RAY CRYSTALLOGRAPHY (2.10 ANGSTROMS) OF 1-345 IN COMPLEX WITH HIV-1 TAT AND CCNT1</scope>
    <scope>PHOSPHORYLATION AT THR-186</scope>
</reference>
<reference key="74">
    <citation type="journal article" date="2008" name="EMBO J.">
        <title>The structure of P-TEFb (CDK9/cyclin T1), its complex with flavopiridol and regulation by phosphorylation.</title>
        <authorList>
            <person name="Baumli S."/>
            <person name="Lolli G."/>
            <person name="Lowe E.D."/>
            <person name="Troiani S."/>
            <person name="Rusconi L."/>
            <person name="Bullock A.N."/>
            <person name="Debreczeni J.E."/>
            <person name="Knapp S."/>
            <person name="Johnson L.N."/>
        </authorList>
    </citation>
    <scope>X-RAY CRYSTALLOGRAPHY (2.48 ANGSTROMS) OF 2-330 IN COMPLEX WITH INHIBITOR FLAVOPIRIDOL; ATP AND CCNT1</scope>
    <scope>PHOSPHORYLATION AT THR-186 SER-347; THR-362 AND THR-363</scope>
    <scope>AUTOPHOSPHORYLATION</scope>
    <scope>MUTAGENESIS OF THR-186</scope>
</reference>
<reference key="75">
    <citation type="journal article" date="2010" name="Chem. Biol.">
        <title>Halogen bonds form the basis for selective P-TEFb inhibition by DRB.</title>
        <authorList>
            <person name="Baumli S."/>
            <person name="Endicott J.A."/>
            <person name="Johnson L.N."/>
        </authorList>
    </citation>
    <scope>X-RAY CRYSTALLOGRAPHY (2.80 ANGSTROMS) OF 2-330 IN COMPLEX WITH INHIBITOR DRB</scope>
    <scope>PHOSPHORYLATION AT THR-186</scope>
</reference>
<reference key="76">
    <citation type="journal article" date="2010" name="Genes Cancer">
        <title>CDK inhibitors roscovitine and CR8 trigger Mcl-1 down-regulation and apoptotic cell death in neuroblastoma cells.</title>
        <authorList>
            <person name="Bettayeb K."/>
            <person name="Baunbaek D."/>
            <person name="Delehouze C."/>
            <person name="Loaec N."/>
            <person name="Hole A.J."/>
            <person name="Baumli S."/>
            <person name="Endicott J.A."/>
            <person name="Douc-Rasy S."/>
            <person name="Benard J."/>
            <person name="Oumata N."/>
            <person name="Galons H."/>
            <person name="Meijer L."/>
        </authorList>
    </citation>
    <scope>X-RAY CRYSTALLOGRAPHY (3.00 ANGSTROMS) OF 2-330 IN COMPLEX WITH CCNT1; INHIBITORS ROSCOVITINE AND CR8</scope>
    <scope>PHOSPHORYLATION AT THR-186</scope>
    <scope>ACTIVITY REGULATION</scope>
</reference>
<reference key="77">
    <citation type="journal article" date="2007" name="Nature">
        <title>Patterns of somatic mutation in human cancer genomes.</title>
        <authorList>
            <person name="Greenman C."/>
            <person name="Stephens P."/>
            <person name="Smith R."/>
            <person name="Dalgliesh G.L."/>
            <person name="Hunter C."/>
            <person name="Bignell G."/>
            <person name="Davies H."/>
            <person name="Teague J."/>
            <person name="Butler A."/>
            <person name="Stevens C."/>
            <person name="Edkins S."/>
            <person name="O'Meara S."/>
            <person name="Vastrik I."/>
            <person name="Schmidt E.E."/>
            <person name="Avis T."/>
            <person name="Barthorpe S."/>
            <person name="Bhamra G."/>
            <person name="Buck G."/>
            <person name="Choudhury B."/>
            <person name="Clements J."/>
            <person name="Cole J."/>
            <person name="Dicks E."/>
            <person name="Forbes S."/>
            <person name="Gray K."/>
            <person name="Halliday K."/>
            <person name="Harrison R."/>
            <person name="Hills K."/>
            <person name="Hinton J."/>
            <person name="Jenkinson A."/>
            <person name="Jones D."/>
            <person name="Menzies A."/>
            <person name="Mironenko T."/>
            <person name="Perry J."/>
            <person name="Raine K."/>
            <person name="Richardson D."/>
            <person name="Shepherd R."/>
            <person name="Small A."/>
            <person name="Tofts C."/>
            <person name="Varian J."/>
            <person name="Webb T."/>
            <person name="West S."/>
            <person name="Widaa S."/>
            <person name="Yates A."/>
            <person name="Cahill D.P."/>
            <person name="Louis D.N."/>
            <person name="Goldstraw P."/>
            <person name="Nicholson A.G."/>
            <person name="Brasseur F."/>
            <person name="Looijenga L."/>
            <person name="Weber B.L."/>
            <person name="Chiew Y.-E."/>
            <person name="DeFazio A."/>
            <person name="Greaves M.F."/>
            <person name="Green A.R."/>
            <person name="Campbell P."/>
            <person name="Birney E."/>
            <person name="Easton D.F."/>
            <person name="Chenevix-Trench G."/>
            <person name="Tan M.-H."/>
            <person name="Khoo S.K."/>
            <person name="Teh B.T."/>
            <person name="Yuen S.T."/>
            <person name="Leung S.Y."/>
            <person name="Wooster R."/>
            <person name="Futreal P.A."/>
            <person name="Stratton M.R."/>
        </authorList>
    </citation>
    <scope>VARIANT [LARGE SCALE ANALYSIS] LEU-59</scope>
</reference>
<reference key="78">
    <citation type="journal article" date="2019" name="Genet. Med.">
        <title>Autozygome and high throughput confirmation of disease genes candidacy.</title>
        <authorList>
            <person name="Maddirevula S."/>
            <person name="Alzahrani F."/>
            <person name="Al-Owain M."/>
            <person name="Al Muhaizea M.A."/>
            <person name="Kayyali H.R."/>
            <person name="AlHashem A."/>
            <person name="Rahbeeni Z."/>
            <person name="Al-Otaibi M."/>
            <person name="Alzaidan H.I."/>
            <person name="Balobaid A."/>
            <person name="El Khashab H.Y."/>
            <person name="Bubshait D.K."/>
            <person name="Faden M."/>
            <person name="Yamani S.A."/>
            <person name="Dabbagh O."/>
            <person name="Al-Mureikhi M."/>
            <person name="Jasser A.A."/>
            <person name="Alsaif H.S."/>
            <person name="Alluhaydan I."/>
            <person name="Seidahmed M.Z."/>
            <person name="Alabbasi B.H."/>
            <person name="Almogarri I."/>
            <person name="Kurdi W."/>
            <person name="Akleh H."/>
            <person name="Qari A."/>
            <person name="Al Tala S.M."/>
            <person name="Alhomaidi S."/>
            <person name="Kentab A.Y."/>
            <person name="Salih M.A."/>
            <person name="Chedrawi A."/>
            <person name="Alameer S."/>
            <person name="Tabarki B."/>
            <person name="Shamseldin H.E."/>
            <person name="Patel N."/>
            <person name="Ibrahim N."/>
            <person name="Abdulwahab F."/>
            <person name="Samira M."/>
            <person name="Goljan E."/>
            <person name="Abouelhoda M."/>
            <person name="Meyer B.F."/>
            <person name="Hashem M."/>
            <person name="Shaheen R."/>
            <person name="AlShahwan S."/>
            <person name="Alfadhel M."/>
            <person name="Ben-Omran T."/>
            <person name="Al-Qattan M.M."/>
            <person name="Monies D."/>
            <person name="Alkuraya F.S."/>
        </authorList>
    </citation>
    <scope>VARIANT CYS-225</scope>
</reference>
<protein>
    <recommendedName>
        <fullName>Cyclin-dependent kinase 9</fullName>
        <ecNumber evidence="16 24 45">2.7.11.22</ecNumber>
        <ecNumber evidence="46 55">2.7.11.23</ecNumber>
    </recommendedName>
    <alternativeName>
        <fullName>C-2K</fullName>
    </alternativeName>
    <alternativeName>
        <fullName>Cell division cycle 2-like protein kinase 4</fullName>
    </alternativeName>
    <alternativeName>
        <fullName evidence="64">Cell division protein kinase 9</fullName>
    </alternativeName>
    <alternativeName>
        <fullName evidence="65">Serine/threonine-protein kinase PITALRE</fullName>
    </alternativeName>
    <alternativeName>
        <fullName>Tat-associated kinase complex catalytic subunit</fullName>
    </alternativeName>
</protein>
<sequence>MAKQYDSVECPFCDEVSKYEKLAKIGQGTFGEVFKARHRKTGQKVALKKVLMENEKEGFPITALREIKILQLLKHENVVNLIEICRTKASPYNRCKGSIYLVFDFCEHDLAGLLSNVLVKFTLSEIKRVMQMLLNGLYYIHRNKILHRDMKAANVLITRDGVLKLADFGLARAFSLAKNSQPNRYTNRVVTLWYRPPELLLGERDYGPPIDLWGAGCIMAEMWTRSPIMQGNTEQHQLALISQLCGSITPEVWPNVDNYELYEKLELVKGQKRKVKDRLKAYVRDPYALDLIDKLLVLDPAQRIDSDDALNHDFFWSDPMPSDLKGMLSTHLTSMFEYLAPPRRKGSQITQQSTNQSRNPATTNQTEFERVF</sequence>
<gene>
    <name evidence="64 69" type="primary">CDK9</name>
    <name type="synonym">CDC2L4</name>
    <name type="synonym">TAK</name>
</gene>
<feature type="chain" id="PRO_0000085800" description="Cyclin-dependent kinase 9">
    <location>
        <begin position="1"/>
        <end position="372"/>
    </location>
</feature>
<feature type="domain" description="Protein kinase" evidence="2">
    <location>
        <begin position="19"/>
        <end position="315"/>
    </location>
</feature>
<feature type="region of interest" description="T-loop">
    <location>
        <begin position="166"/>
        <end position="191"/>
    </location>
</feature>
<feature type="region of interest" description="Disordered" evidence="4">
    <location>
        <begin position="343"/>
        <end position="372"/>
    </location>
</feature>
<feature type="compositionally biased region" description="Polar residues" evidence="4">
    <location>
        <begin position="347"/>
        <end position="366"/>
    </location>
</feature>
<feature type="active site" description="Proton acceptor" evidence="2 3">
    <location>
        <position position="149"/>
    </location>
</feature>
<feature type="binding site" evidence="2">
    <location>
        <begin position="25"/>
        <end position="33"/>
    </location>
    <ligand>
        <name>ATP</name>
        <dbReference type="ChEBI" id="CHEBI:30616"/>
    </ligand>
</feature>
<feature type="binding site" evidence="2 33">
    <location>
        <position position="48"/>
    </location>
    <ligand>
        <name>ATP</name>
        <dbReference type="ChEBI" id="CHEBI:30616"/>
    </ligand>
</feature>
<feature type="binding site" evidence="2 33">
    <location>
        <begin position="104"/>
        <end position="106"/>
    </location>
    <ligand>
        <name>ATP</name>
        <dbReference type="ChEBI" id="CHEBI:30616"/>
    </ligand>
</feature>
<feature type="binding site" evidence="2 33">
    <location>
        <position position="167"/>
    </location>
    <ligand>
        <name>ATP</name>
        <dbReference type="ChEBI" id="CHEBI:30616"/>
    </ligand>
</feature>
<feature type="modified residue" description="N6-acetyllysine; by EP300/CBP, PCAF/KAT2B and GCN5/KAT2A" evidence="26 30">
    <location>
        <position position="44"/>
    </location>
</feature>
<feature type="modified residue" description="N6-acetyllysine; by PCAF/KAT2B and GCN5/KAT2A" evidence="30 55">
    <location>
        <position position="48"/>
    </location>
</feature>
<feature type="modified residue" description="Phosphoserine" evidence="49">
    <location>
        <position position="175"/>
    </location>
</feature>
<feature type="modified residue" description="Phosphothreonine; by CaMK1D" evidence="21 32 33 34 42 43 47 50 72">
    <location>
        <position position="186"/>
    </location>
</feature>
<feature type="modified residue" description="Phosphoserine; by CDK9 and PKA" evidence="10 33 60 70 71 73">
    <location>
        <position position="347"/>
    </location>
</feature>
<feature type="modified residue" description="Phosphothreonine; by CDK9" evidence="10 71">
    <location>
        <position position="350"/>
    </location>
</feature>
<feature type="modified residue" description="Phosphoserine; by CDK9" evidence="10">
    <location>
        <position position="353"/>
    </location>
</feature>
<feature type="modified residue" description="Phosphothreonine; by CDK9" evidence="10">
    <location>
        <position position="354"/>
    </location>
</feature>
<feature type="modified residue" description="Phosphoserine; by CDK9" evidence="10">
    <location>
        <position position="357"/>
    </location>
</feature>
<feature type="modified residue" description="Phosphothreonine; by CDK9" evidence="33">
    <location>
        <position position="362"/>
    </location>
</feature>
<feature type="modified residue" description="Phosphothreonine; by CDK9" evidence="33">
    <location>
        <position position="363"/>
    </location>
</feature>
<feature type="splice variant" id="VSP_016288" description="In isoform 2." evidence="66">
    <original>M</original>
    <variation>MQRDAPPRAPAPAPRLPAPPIGAAASSGGGGGGGSGGGGGGASAAPAPPGLSGTTSPRGPGGGRRAEEAGSAPRGRKWPWRRKWRGRGGAWSAAAAGPGAGAAAAATGGGGGALEAAM</variation>
    <location>
        <position position="1"/>
    </location>
</feature>
<feature type="sequence variant" id="VAR_041982" description="In dbSNP:rs55640715." evidence="25">
    <original>F</original>
    <variation>L</variation>
    <location>
        <position position="59"/>
    </location>
</feature>
<feature type="sequence variant" id="VAR_082140" description="Found in patients with global developmental delay and epilepsy with history of choanal atresia; uncertain significance; dbSNP:rs767418586." evidence="58">
    <original>R</original>
    <variation>C</variation>
    <location>
        <position position="225"/>
    </location>
</feature>
<feature type="sequence variant" id="VAR_013456" evidence="8 61">
    <original>G</original>
    <variation>A</variation>
    <location>
        <position position="231"/>
    </location>
</feature>
<feature type="mutagenesis site" description="Impaired kinase and transcriptional elongation activities, but normal cyclin T1 and HEXIM1 binding." evidence="26">
    <original>K</original>
    <variation>R</variation>
    <location>
        <position position="44"/>
    </location>
</feature>
<feature type="mutagenesis site" description="Mimics acetylation; leading to impaired protein kinase activity." evidence="55">
    <original>K</original>
    <variation>Q</variation>
    <location>
        <position position="48"/>
    </location>
</feature>
<feature type="mutagenesis site" description="Decreased acetylation; leading to enhanced protein kinase activity." evidence="55">
    <original>K</original>
    <variation>R</variation>
    <location>
        <position position="48"/>
    </location>
</feature>
<feature type="mutagenesis site" description="Abrogates kinase activity." evidence="10 12">
    <original>D</original>
    <variation>N</variation>
    <location>
        <position position="167"/>
    </location>
</feature>
<feature type="mutagenesis site" description="Constitutive kinase activity." evidence="49">
    <original>S</original>
    <variation>A</variation>
    <location>
        <position position="175"/>
    </location>
</feature>
<feature type="mutagenesis site" description="Mimics phosphorylation, constitutive loss of kinase activity." evidence="49">
    <original>S</original>
    <variation>D</variation>
    <location>
        <position position="175"/>
    </location>
</feature>
<feature type="mutagenesis site" description="Abrogates autophosphorylation; no effect on kinase activity, but impaired CTD phosphorylation." evidence="12 33 47">
    <original>T</original>
    <variation>A</variation>
    <location>
        <position position="186"/>
    </location>
</feature>
<feature type="mutagenesis site" description="Mimics autophosphorylation; constitutive kinase activity, independently of calcium signaling." evidence="12 33 47">
    <original>T</original>
    <variation>D</variation>
    <location>
        <position position="186"/>
    </location>
</feature>
<feature type="mutagenesis site" description="Loss of autophosphorylation and impaired interaction with HIV TAT." evidence="10">
    <original>SQITQQSTNQS</original>
    <variation>AQIAQQAANQA</variation>
    <location>
        <begin position="347"/>
        <end position="357"/>
    </location>
</feature>
<feature type="mutagenesis site" description="Mimics autophosphorylation and promotes interaction with HIV TAT." evidence="10">
    <original>SQITQQSTNQS</original>
    <variation>EQIEQQEENQE</variation>
    <location>
        <begin position="347"/>
        <end position="357"/>
    </location>
</feature>
<feature type="sequence conflict" description="In Ref. 4; AAV38706." evidence="66" ref="4">
    <original>L</original>
    <variation>P</variation>
    <location>
        <position position="163"/>
    </location>
</feature>
<feature type="strand" evidence="79">
    <location>
        <begin position="11"/>
        <end position="13"/>
    </location>
</feature>
<feature type="helix" evidence="76">
    <location>
        <begin position="16"/>
        <end position="18"/>
    </location>
</feature>
<feature type="strand" evidence="76">
    <location>
        <begin position="19"/>
        <end position="24"/>
    </location>
</feature>
<feature type="strand" evidence="74">
    <location>
        <begin position="28"/>
        <end position="30"/>
    </location>
</feature>
<feature type="strand" evidence="76">
    <location>
        <begin position="32"/>
        <end position="38"/>
    </location>
</feature>
<feature type="turn" evidence="76">
    <location>
        <begin position="39"/>
        <end position="41"/>
    </location>
</feature>
<feature type="strand" evidence="76">
    <location>
        <begin position="44"/>
        <end position="49"/>
    </location>
</feature>
<feature type="strand" evidence="76">
    <location>
        <begin position="56"/>
        <end position="59"/>
    </location>
</feature>
<feature type="helix" evidence="76">
    <location>
        <begin position="61"/>
        <end position="72"/>
    </location>
</feature>
<feature type="strand" evidence="76">
    <location>
        <begin position="81"/>
        <end position="87"/>
    </location>
</feature>
<feature type="strand" evidence="76">
    <location>
        <begin position="98"/>
        <end position="104"/>
    </location>
</feature>
<feature type="strand" evidence="76">
    <location>
        <begin position="107"/>
        <end position="109"/>
    </location>
</feature>
<feature type="helix" evidence="76">
    <location>
        <begin position="110"/>
        <end position="115"/>
    </location>
</feature>
<feature type="strand" evidence="75">
    <location>
        <begin position="116"/>
        <end position="118"/>
    </location>
</feature>
<feature type="helix" evidence="76">
    <location>
        <begin position="123"/>
        <end position="142"/>
    </location>
</feature>
<feature type="helix" evidence="76">
    <location>
        <begin position="152"/>
        <end position="154"/>
    </location>
</feature>
<feature type="strand" evidence="76">
    <location>
        <begin position="155"/>
        <end position="157"/>
    </location>
</feature>
<feature type="strand" evidence="79">
    <location>
        <begin position="159"/>
        <end position="161"/>
    </location>
</feature>
<feature type="strand" evidence="76">
    <location>
        <begin position="163"/>
        <end position="165"/>
    </location>
</feature>
<feature type="helix" evidence="78">
    <location>
        <begin position="168"/>
        <end position="170"/>
    </location>
</feature>
<feature type="strand" evidence="76">
    <location>
        <begin position="178"/>
        <end position="181"/>
    </location>
</feature>
<feature type="helix" evidence="76">
    <location>
        <begin position="192"/>
        <end position="194"/>
    </location>
</feature>
<feature type="helix" evidence="76">
    <location>
        <begin position="197"/>
        <end position="200"/>
    </location>
</feature>
<feature type="helix" evidence="76">
    <location>
        <begin position="209"/>
        <end position="224"/>
    </location>
</feature>
<feature type="helix" evidence="76">
    <location>
        <begin position="234"/>
        <end position="245"/>
    </location>
</feature>
<feature type="turn" evidence="76">
    <location>
        <begin position="250"/>
        <end position="252"/>
    </location>
</feature>
<feature type="helix" evidence="76">
    <location>
        <begin position="256"/>
        <end position="258"/>
    </location>
</feature>
<feature type="helix" evidence="76">
    <location>
        <begin position="260"/>
        <end position="262"/>
    </location>
</feature>
<feature type="helix" evidence="77">
    <location>
        <begin position="263"/>
        <end position="265"/>
    </location>
</feature>
<feature type="helix" evidence="76">
    <location>
        <begin position="275"/>
        <end position="283"/>
    </location>
</feature>
<feature type="helix" evidence="76">
    <location>
        <begin position="286"/>
        <end position="295"/>
    </location>
</feature>
<feature type="helix" evidence="76">
    <location>
        <begin position="300"/>
        <end position="302"/>
    </location>
</feature>
<feature type="helix" evidence="76">
    <location>
        <begin position="306"/>
        <end position="310"/>
    </location>
</feature>
<feature type="helix" evidence="76">
    <location>
        <begin position="313"/>
        <end position="316"/>
    </location>
</feature>
<feature type="strand" evidence="76">
    <location>
        <begin position="317"/>
        <end position="319"/>
    </location>
</feature>
<feature type="helix" evidence="76">
    <location>
        <begin position="325"/>
        <end position="329"/>
    </location>
</feature>
<feature type="helix" evidence="76">
    <location>
        <begin position="335"/>
        <end position="339"/>
    </location>
</feature>
<feature type="modified residue" description="Phosphoserine" evidence="70 71">
    <location sequence="P50750-2">
        <position position="35"/>
    </location>
</feature>
<feature type="modified residue" description="Phosphothreonine" evidence="73">
    <location sequence="P50750-2">
        <position position="54"/>
    </location>
</feature>
<comment type="function">
    <text evidence="5 6 7 9 11 12 13 14 15 16 19 20 22 23 24 28 31 36 37 38 41 44 45 46 55 56 57 63">Protein kinase involved in the regulation of transcription (PubMed:10574912, PubMed:10757782, PubMed:11145967, PubMed:11575923, PubMed:11809800, PubMed:11884399, PubMed:14701750, PubMed:16109376, PubMed:16109377, PubMed:20930849, PubMed:28426094, PubMed:29335245). Member of the cyclin-dependent kinase pair (CDK9/cyclin-T) complex, also called positive transcription elongation factor b (P-TEFb), which facilitates the transition from abortive to productive elongation by phosphorylating the CTD (C-terminal domain) of the large subunit of RNA polymerase II (RNAP II) POLR2A, SUPT5H and RDBP (PubMed:10574912, PubMed:10757782, PubMed:11145967, PubMed:11575923, PubMed:11809800, PubMed:11884399, PubMed:14701750, PubMed:16109376, PubMed:16109377, PubMed:16427012, PubMed:20930849, PubMed:28426094, PubMed:30134174). This complex is inactive when in the 7SK snRNP complex form (PubMed:10574912, PubMed:10757782, PubMed:11145967, PubMed:11575923, PubMed:11809800, PubMed:11884399, PubMed:14701750, PubMed:16109376, PubMed:16109377, PubMed:20930849, PubMed:28426094). Phosphorylates EP300, MYOD1, RPB1/POLR2A and AR and the negative elongation factors DSIF and NELFE (PubMed:10912001, PubMed:11112772, PubMed:12037670, PubMed:16427012, PubMed:20081228, PubMed:20980437, PubMed:21127351, PubMed:9857195). Regulates cytokine inducible transcription networks by facilitating promoter recognition of target transcription factors (e.g. TNF-inducible RELA/p65 activation and IL-6-inducible STAT3 signaling) (PubMed:17956865, PubMed:18362169). Promotes RNA synthesis in genetic programs for cell growth, differentiation and viral pathogenesis (PubMed:10393184, PubMed:11112772). P-TEFb is also involved in cotranscriptional histone modification, mRNA processing and mRNA export (PubMed:15564463, PubMed:19575011, PubMed:19844166). Modulates a complex network of chromatin modifications including histone H2B monoubiquitination (H2Bub1), H3 lysine 4 trimethylation (H3K4me3) and H3K36me3; integrates phosphorylation during transcription with chromatin modifications to control co-transcriptional histone mRNA processing (PubMed:15564463, PubMed:19575011, PubMed:19844166). The CDK9/cyclin-K complex has also a kinase activity towards CTD of RNAP II and can substitute for CDK9/cyclin-T P-TEFb in vitro (PubMed:21127351). Replication stress response protein; the CDK9/cyclin-K complex is required for genome integrity maintenance, by promoting cell cycle recovery from replication arrest and limiting single-stranded DNA amount in response to replication stress, thus reducing the breakdown of stalled replication forks and avoiding DNA damage (PubMed:20493174). In addition, probable function in DNA repair of isoform 2 via interaction with KU70/XRCC6 (PubMed:20493174). Promotes cardiac myocyte enlargement (PubMed:20081228). RPB1/POLR2A phosphorylation on 'Ser-2' in CTD activates transcription (PubMed:21127351). AR phosphorylation modulates AR transcription factor promoter selectivity and cell growth. DSIF and NELF phosphorylation promotes transcription by inhibiting their negative effect (PubMed:10912001, PubMed:11112772, PubMed:9857195). The phosphorylation of MYOD1 enhances its transcriptional activity and thus promotes muscle differentiation (PubMed:12037670). Catalyzes phosphorylation of KAT5, promoting KAT5 recruitment to chromatin and histone acetyltransferase activity (PubMed:29335245).</text>
</comment>
<comment type="catalytic activity">
    <reaction evidence="16 45 56">
        <text>L-seryl-[protein] + ATP = O-phospho-L-seryl-[protein] + ADP + H(+)</text>
        <dbReference type="Rhea" id="RHEA:17989"/>
        <dbReference type="Rhea" id="RHEA-COMP:9863"/>
        <dbReference type="Rhea" id="RHEA-COMP:11604"/>
        <dbReference type="ChEBI" id="CHEBI:15378"/>
        <dbReference type="ChEBI" id="CHEBI:29999"/>
        <dbReference type="ChEBI" id="CHEBI:30616"/>
        <dbReference type="ChEBI" id="CHEBI:83421"/>
        <dbReference type="ChEBI" id="CHEBI:456216"/>
        <dbReference type="EC" id="2.7.11.22"/>
    </reaction>
    <physiologicalReaction direction="left-to-right" evidence="16 45 56">
        <dbReference type="Rhea" id="RHEA:17990"/>
    </physiologicalReaction>
</comment>
<comment type="catalytic activity">
    <reaction evidence="16 24 45">
        <text>L-threonyl-[protein] + ATP = O-phospho-L-threonyl-[protein] + ADP + H(+)</text>
        <dbReference type="Rhea" id="RHEA:46608"/>
        <dbReference type="Rhea" id="RHEA-COMP:11060"/>
        <dbReference type="Rhea" id="RHEA-COMP:11605"/>
        <dbReference type="ChEBI" id="CHEBI:15378"/>
        <dbReference type="ChEBI" id="CHEBI:30013"/>
        <dbReference type="ChEBI" id="CHEBI:30616"/>
        <dbReference type="ChEBI" id="CHEBI:61977"/>
        <dbReference type="ChEBI" id="CHEBI:456216"/>
        <dbReference type="EC" id="2.7.11.22"/>
    </reaction>
    <physiologicalReaction direction="left-to-right" evidence="16 45">
        <dbReference type="Rhea" id="RHEA:46609"/>
    </physiologicalReaction>
</comment>
<comment type="catalytic activity">
    <reaction evidence="46 55">
        <text>[DNA-directed RNA polymerase] + ATP = phospho-[DNA-directed RNA polymerase] + ADP + H(+)</text>
        <dbReference type="Rhea" id="RHEA:10216"/>
        <dbReference type="Rhea" id="RHEA-COMP:11321"/>
        <dbReference type="Rhea" id="RHEA-COMP:11322"/>
        <dbReference type="ChEBI" id="CHEBI:15378"/>
        <dbReference type="ChEBI" id="CHEBI:30616"/>
        <dbReference type="ChEBI" id="CHEBI:43176"/>
        <dbReference type="ChEBI" id="CHEBI:68546"/>
        <dbReference type="ChEBI" id="CHEBI:456216"/>
        <dbReference type="EC" id="2.7.11.23"/>
    </reaction>
    <physiologicalReaction direction="left-to-right" evidence="46 55">
        <dbReference type="Rhea" id="RHEA:10217"/>
    </physiologicalReaction>
</comment>
<comment type="activity regulation">
    <text evidence="30 32 35 47 48 50">Inhibited by CDKI-71, CR8, GPC-286199, AG-024322, flavopiridol (alvocidib), RBG-286147, anilinopyrimidine 32, arylazopyrazole 31b, indirubin 3'-monoxime, meriolin 3,P276-00, olomoucine II, pyrazolotriazine, meriolin, variolin, thiazolyl-pyrimidine, thiazolyl-pyrimidine, indirubin-30-monoxime, ZK 304709, AG-012986, AT7519, R547, RGB-286638, imidazole pyrimidine, EXEL-3700, EXEL-8647, 5,6-dichloro-1-b-ribofur-anosyl-benzimidazole (DRB), P276-00, roscovitine (seliciclib, CYC202) and SNS-032 (BMS-387032). Activation by Thr-186 phosphorylation is calcium Ca(2+) signaling pathway-dependent; actively inactivated by dephosphorylation mediated by PPP1CA, PPM1A and PPM1B. Reversibly repressed by acetylation at Lys-44 and Lys-48.</text>
</comment>
<comment type="subunit">
    <text evidence="1 5 6 15 16 17 18 21 22 23 26 27 28 29 31 32 33 38 39 40 42 45 46 50 51 53 54 57 62">Component of the super elongation complex (SEC), at least composed of EAF1, EAF2, CDK9, MLLT3/AF9, AFF (AFF1 or AFF4), the P-TEFb complex and ELL (ELL, ELL2 or ELL3). Associates with CCNT1/cyclin-T1, CCNT2/cyclin-T2 (isoform A and isoform B) or CCNK/cyclin-K to form active P-TEFb. P-TEFb forms a complex with AFF4/AF5Q31 and is part of the super elongation complex (SEC). Component of a complex which is composed of at least 5 members: HTATSF1/Tat-SF1, P-TEFb complex, RNA pol II, SUPT5H and NCL/nucleolin. Associates with UBR5 and forms a transcription regulatory complex composed of CDK9, RNAP II, UBR5 and TFIIS/TCEA1 that can stimulate target gene transcription (e.g. gamma fibrinogen/FGG) by recruiting their promoters. Component of the 7SK snRNP inactive complex which is composed of at least 8 members: P-TEFb (composed of CDK9 and CCNT1/cyclin-T1), HEXIM1, HEXIM2, LARP7, BCDIN3, SART3 proteins and 7SK and U6 snRNAs. This inactive 7SK snRNP complex can also interact with NCOR1 and HDAC3, probably to regulate CDK9 acetylation. Release of P-TEFb from P-TEFb/7SK snRNP complex requires both PP2B to transduce calcium Ca(2+) signaling in response to stimuli (e.g. UV or hexamethylene bisacetamide (HMBA)) and PPP1CA to dephosphorylate Thr-186. This released P-TEFb remains inactive in the pre-initiation complex with BRD4 until new Thr-186 phosphorylation occurs after the synthesis of a short RNA (PubMed:10393184, PubMed:10574912, PubMed:11884399, PubMed:12037670, PubMed:12065898, PubMed:12718890, PubMed:15965233, PubMed:16109376, PubMed:17452463, PubMed:17643375, PubMed:18249148, PubMed:18483222, PubMed:18566585, PubMed:20159561, PubMed:20471948, PubMed:21127351, PubMed:21779453, PubMed:22195968, PubMed:30134174, PubMed:9491887). Interacts with BRD4; to target chromatin binding (PubMed:16109376, PubMed:16109377, PubMed:18483222). Interacts with JMJD6 (PubMed:24360279). Interacts with activated nuclear STAT3 and RELA/p65 (PubMed:17956865, PubMed:18362169). Binds to AR and MYOD1 (PubMed:12037670, PubMed:20980437). Forms a complex composed of CDK9, CCNT1/cyclin-T1, EP300 and GATA4 that stimulates hypertrophy in cardiomyocytes (PubMed:20081228). The large PER complex involved in the repression of transcriptional termination is composed of at least PER2, CDK9, DDX5, DHX9, NCBP1 and POLR2A (By similarity). Interacts with HSF1 (PubMed:27189267). Interacts with TBX21 (By similarity). Isoform 3: binds to KU70/XRCC6 (PubMed:20535204). Interacts with WDR43 (By similarity). Interacts with ZMYND8; the association appears to occur between homodimeric ZMYND8 and the activated form of the P-TEFb complex (PubMed:30134174).</text>
</comment>
<comment type="subunit">
    <text evidence="10 62">(Microbial infection) Interacts with the acidic/proline-rich region of HIV-1 and HIV-2 Tat via T-loop region and is thus required for HIV to hijack host transcription machinery during its replication through cooperative binding to viral TAR RNA.</text>
</comment>
<comment type="subunit">
    <text evidence="52 59">(Microbial infection) Interacts with human herpes virus 1 (HHV-1) protein ICP22; this interaction blocks the recruitment of positive transcription elongation factor b (P-TEFb) to the viral promoter.</text>
</comment>
<comment type="interaction">
    <interactant intactId="EBI-1383449">
        <id>P50750</id>
    </interactant>
    <interactant intactId="EBI-968983">
        <id>Q13535</id>
        <label>ATR</label>
    </interactant>
    <organismsDiffer>false</organismsDiffer>
    <experiments>3</experiments>
</comment>
<comment type="interaction">
    <interactant intactId="EBI-1383449">
        <id>P50750</id>
    </interactant>
    <interactant intactId="EBI-747353">
        <id>Q8WXE1</id>
        <label>ATRIP</label>
    </interactant>
    <organismsDiffer>false</organismsDiffer>
    <experiments>3</experiments>
</comment>
<comment type="interaction">
    <interactant intactId="EBI-1383449">
        <id>P50750</id>
    </interactant>
    <interactant intactId="EBI-9345088">
        <id>O60885-1</id>
        <label>BRD4</label>
    </interactant>
    <organismsDiffer>false</organismsDiffer>
    <experiments>9</experiments>
</comment>
<comment type="interaction">
    <interactant intactId="EBI-1383449">
        <id>P50750</id>
    </interactant>
    <interactant intactId="EBI-2479671">
        <id>O60563</id>
        <label>CCNT1</label>
    </interactant>
    <organismsDiffer>false</organismsDiffer>
    <experiments>30</experiments>
</comment>
<comment type="interaction">
    <interactant intactId="EBI-1383449">
        <id>P50750</id>
    </interactant>
    <interactant intactId="EBI-2836757">
        <id>O60583</id>
        <label>CCNT2</label>
    </interactant>
    <organismsDiffer>false</organismsDiffer>
    <experiments>10</experiments>
</comment>
<comment type="interaction">
    <interactant intactId="EBI-1383449">
        <id>P50750</id>
    </interactant>
    <interactant intactId="EBI-9077118">
        <id>O60583-1</id>
        <label>CCNT2</label>
    </interactant>
    <organismsDiffer>false</organismsDiffer>
    <experiments>3</experiments>
</comment>
<comment type="interaction">
    <interactant intactId="EBI-1383449">
        <id>P50750</id>
    </interactant>
    <interactant intactId="EBI-9077112">
        <id>O60583-2</id>
        <label>CCNT2</label>
    </interactant>
    <organismsDiffer>false</organismsDiffer>
    <experiments>2</experiments>
</comment>
<comment type="interaction">
    <interactant intactId="EBI-1383449">
        <id>P50750</id>
    </interactant>
    <interactant intactId="EBI-295634">
        <id>Q16543</id>
        <label>CDC37</label>
    </interactant>
    <organismsDiffer>false</organismsDiffer>
    <experiments>9</experiments>
</comment>
<comment type="interaction">
    <interactant intactId="EBI-1383449">
        <id>P50750</id>
    </interactant>
    <interactant intactId="EBI-1369377">
        <id>Q9HAW4</id>
        <label>CLSPN</label>
    </interactant>
    <organismsDiffer>false</organismsDiffer>
    <experiments>3</experiments>
</comment>
<comment type="interaction">
    <interactant intactId="EBI-1383449">
        <id>P50750</id>
    </interactant>
    <interactant intactId="EBI-357942">
        <id>Q9NR30</id>
        <label>DDX21</label>
    </interactant>
    <organismsDiffer>false</organismsDiffer>
    <experiments>2</experiments>
</comment>
<comment type="interaction">
    <interactant intactId="EBI-1383449">
        <id>P50750</id>
    </interactant>
    <interactant intactId="EBI-306914">
        <id>Q13451</id>
        <label>FKBP5</label>
    </interactant>
    <organismsDiffer>false</organismsDiffer>
    <experiments>10</experiments>
</comment>
<comment type="interaction">
    <interactant intactId="EBI-1383449">
        <id>P50750</id>
    </interactant>
    <interactant intactId="EBI-2832510">
        <id>O94992</id>
        <label>HEXIM1</label>
    </interactant>
    <organismsDiffer>false</organismsDiffer>
    <experiments>17</experiments>
</comment>
<comment type="interaction">
    <interactant intactId="EBI-1383449">
        <id>P50750</id>
    </interactant>
    <interactant intactId="EBI-296047">
        <id>P07900</id>
        <label>HSP90AA1</label>
    </interactant>
    <organismsDiffer>false</organismsDiffer>
    <experiments>6</experiments>
</comment>
<comment type="interaction">
    <interactant intactId="EBI-1383449">
        <id>P50750</id>
    </interactant>
    <interactant intactId="EBI-352572">
        <id>P08238</id>
        <label>HSP90AB1</label>
    </interactant>
    <organismsDiffer>false</organismsDiffer>
    <experiments>6</experiments>
</comment>
<comment type="interaction">
    <interactant intactId="EBI-1383449">
        <id>P50750</id>
    </interactant>
    <interactant intactId="EBI-8464037">
        <id>Q6NYC1</id>
        <label>JMJD6</label>
    </interactant>
    <organismsDiffer>false</organismsDiffer>
    <experiments>5</experiments>
</comment>
<comment type="interaction">
    <interactant intactId="EBI-1383449">
        <id>P50750</id>
    </interactant>
    <interactant intactId="EBI-2371923">
        <id>Q4G0J3</id>
        <label>LARP7</label>
    </interactant>
    <organismsDiffer>false</organismsDiffer>
    <experiments>18</experiments>
</comment>
<comment type="interaction">
    <interactant intactId="EBI-1383449">
        <id>P50750</id>
    </interactant>
    <interactant intactId="EBI-716663">
        <id>P53041</id>
        <label>PPP5C</label>
    </interactant>
    <organismsDiffer>false</organismsDiffer>
    <experiments>3</experiments>
</comment>
<comment type="interaction">
    <interactant intactId="EBI-1383449">
        <id>P50750</id>
    </interactant>
    <interactant intactId="EBI-518675">
        <id>P40763</id>
        <label>STAT3</label>
    </interactant>
    <organismsDiffer>false</organismsDiffer>
    <experiments>2</experiments>
</comment>
<comment type="interaction">
    <interactant intactId="EBI-1383449">
        <id>P50750</id>
    </interactant>
    <interactant intactId="EBI-6164389">
        <id>P04608</id>
        <label>tat</label>
    </interactant>
    <organismsDiffer>true</organismsDiffer>
    <experiments>8</experiments>
</comment>
<comment type="interaction">
    <interactant intactId="EBI-12029902">
        <id>P50750-2</id>
    </interactant>
    <interactant intactId="EBI-747754">
        <id>P28799</id>
        <label>GRN</label>
    </interactant>
    <organismsDiffer>false</organismsDiffer>
    <experiments>3</experiments>
</comment>
<comment type="interaction">
    <interactant intactId="EBI-12029902">
        <id>P50750-2</id>
    </interactant>
    <interactant intactId="EBI-25860013">
        <id>P28799-2</id>
        <label>GRN</label>
    </interactant>
    <organismsDiffer>false</organismsDiffer>
    <experiments>3</experiments>
</comment>
<comment type="interaction">
    <interactant intactId="EBI-12029902">
        <id>P50750-2</id>
    </interactant>
    <interactant intactId="EBI-12029900">
        <id>Q6XYB7-2</id>
        <label>LBX2</label>
    </interactant>
    <organismsDiffer>false</organismsDiffer>
    <experiments>3</experiments>
</comment>
<comment type="subcellular location">
    <subcellularLocation>
        <location>Nucleus</location>
    </subcellularLocation>
    <subcellularLocation>
        <location>Cytoplasm</location>
    </subcellularLocation>
    <subcellularLocation>
        <location>Nucleus</location>
        <location>PML body</location>
    </subcellularLocation>
    <text>Accumulates on chromatin in response to replication stress. Complexed with CCNT1 in nuclear speckles, but uncomplexed form in the cytoplasm. The translocation from nucleus to cytoplasm is XPO1/CRM1-dependent. Associates with PML body when acetylated.</text>
</comment>
<comment type="alternative products">
    <event type="alternative splicing"/>
    <isoform>
        <id>P50750-1</id>
        <name>1</name>
        <sequence type="displayed"/>
    </isoform>
    <isoform>
        <id>P50750-2</id>
        <name>2</name>
        <sequence type="described" ref="VSP_016288"/>
    </isoform>
</comment>
<comment type="tissue specificity">
    <text>Ubiquitous.</text>
</comment>
<comment type="induction">
    <text>By replication stress, in chromatin. Probably degraded by the proteasome upon Thr-186 dephosphorylation.</text>
</comment>
<comment type="PTM">
    <text evidence="10 21 32 33 34 42 43 47 49 50">Autophosphorylation at Thr-186, Ser-347, Thr-350, Ser-353, Thr-354 and Ser-357 triggers kinase activity by promoting cyclin and substrate binding (e.g. HIV TAT) upon conformational changes. Thr-186 phosphorylation requires the calcium Ca(2+) signaling pathway, including CaMK1D and calmodulin. This inhibition is relieved by Thr-29 dephosphorylation. However, phosphorylation at Thr-29 is inhibitory within the HIV transcription initiation complex. Phosphorylation at Ser-175 inhibits kinase activity. Can be phosphorylated on either Thr-362 or Thr-363 but not on both simultaneously (PubMed:18566585).</text>
</comment>
<comment type="PTM">
    <text evidence="32 34 60">Dephosphorylation of Thr-186 by PPM1A and PPM1B blocks CDK9 activity and may lead to CDK9 proteasomal degradation (PubMed:18483222, PubMed:18829461). However, PPP1CA-mediated Thr-186 dephosphorylation is required to release P-TEFb from its inactive P-TEFb/7SK snRNP complex (PubMed:18483222, PubMed:18829461). Dephosphorylated at Ser-347 by the PNUTS-PP1 complex during RNA polymerase II transcription pause-release (PubMed:39603239). Dephosphorylation of C-terminus Thr and Ser residues by protein phosphatase-1 (PP1) triggers CDK9 activity, contributing to the activation of HIV-1 transcription.</text>
</comment>
<comment type="PTM">
    <text evidence="26 30 55">N6-acetylation of Lys-44 promotes kinase activity, whereas acetylation of both Lys-44 and Lys-48 mediated by PCAF/KAT2B and GCN5/KAT2A reduces kinase activity (PubMed:17452463, PubMed:18250157). The acetylated form associates with PML bodies in the nuclear matrix and with the transcriptionally silent HIV-1 genome; deacetylated upon transcription stimulation (PubMed:17452463, PubMed:18250157). Deacetylated by SIRT7, promoting the kinase activity and subsequent 'Ser-2' phosphorylation of the C-terminal domain (CTD) of RNA polymerase II (PubMed:28426094).</text>
</comment>
<comment type="PTM">
    <text evidence="46">Polyubiquitinated and thus activated by UBR5. This ubiquitination is promoted by TFIIS/TCEA1 and favors 'Ser-2' phosphorylation of RPB1/POLR2A CTD.</text>
</comment>
<comment type="disease">
    <text>Chronic activation of CDK9 causes cardiac myocyte enlargement leading to cardiac hypertrophy and confers predisposition to heart failure.</text>
</comment>
<comment type="miscellaneous">
    <text evidence="67 68">CDK9 inhibition contributes to the anticancer activity of most CDK inhibitors under clinical investigation (PubMed:18423896, PubMed:21779453). As a retroviruses target during the hijack of host transcription (e.g. HIV), CDK9 inhibitors might become specific antiretroviral agents (PubMed:18423896). May be a target for cardiac hypertrophy future treatments (PubMed:18423896, PubMed:19757441). May also be a target in anti-inflammatory therapy in innate immunity and systemic inflammation (PubMed:18728388).</text>
</comment>
<comment type="similarity">
    <text evidence="66">Belongs to the protein kinase superfamily. CMGC Ser/Thr protein kinase family. CDC2/CDKX subfamily.</text>
</comment>
<proteinExistence type="evidence at protein level"/>